<evidence type="ECO:0000250" key="1">
    <source>
        <dbReference type="UniProtKB" id="P40763"/>
    </source>
</evidence>
<evidence type="ECO:0000250" key="2">
    <source>
        <dbReference type="UniProtKB" id="P52631"/>
    </source>
</evidence>
<evidence type="ECO:0000255" key="3">
    <source>
        <dbReference type="PROSITE-ProRule" id="PRU00191"/>
    </source>
</evidence>
<evidence type="ECO:0000269" key="4">
    <source>
    </source>
</evidence>
<evidence type="ECO:0000269" key="5">
    <source>
    </source>
</evidence>
<evidence type="ECO:0000269" key="6">
    <source>
    </source>
</evidence>
<evidence type="ECO:0000269" key="7">
    <source>
    </source>
</evidence>
<evidence type="ECO:0000269" key="8">
    <source>
    </source>
</evidence>
<evidence type="ECO:0000269" key="9">
    <source>
    </source>
</evidence>
<evidence type="ECO:0000269" key="10">
    <source>
    </source>
</evidence>
<evidence type="ECO:0000269" key="11">
    <source>
    </source>
</evidence>
<evidence type="ECO:0000269" key="12">
    <source>
    </source>
</evidence>
<evidence type="ECO:0000269" key="13">
    <source>
    </source>
</evidence>
<evidence type="ECO:0000269" key="14">
    <source>
    </source>
</evidence>
<evidence type="ECO:0000269" key="15">
    <source>
    </source>
</evidence>
<evidence type="ECO:0000269" key="16">
    <source>
    </source>
</evidence>
<evidence type="ECO:0000269" key="17">
    <source>
    </source>
</evidence>
<evidence type="ECO:0000269" key="18">
    <source>
    </source>
</evidence>
<evidence type="ECO:0000269" key="19">
    <source>
    </source>
</evidence>
<evidence type="ECO:0000269" key="20">
    <source>
    </source>
</evidence>
<evidence type="ECO:0000269" key="21">
    <source>
    </source>
</evidence>
<evidence type="ECO:0000269" key="22">
    <source>
    </source>
</evidence>
<evidence type="ECO:0000269" key="23">
    <source>
    </source>
</evidence>
<evidence type="ECO:0000269" key="24">
    <source>
    </source>
</evidence>
<evidence type="ECO:0000269" key="25">
    <source>
    </source>
</evidence>
<evidence type="ECO:0000269" key="26">
    <source>
    </source>
</evidence>
<evidence type="ECO:0000269" key="27">
    <source>
    </source>
</evidence>
<evidence type="ECO:0000269" key="28">
    <source>
    </source>
</evidence>
<evidence type="ECO:0000269" key="29">
    <source>
    </source>
</evidence>
<evidence type="ECO:0000269" key="30">
    <source ref="18"/>
</evidence>
<evidence type="ECO:0000303" key="31">
    <source>
    </source>
</evidence>
<evidence type="ECO:0000303" key="32">
    <source>
    </source>
</evidence>
<evidence type="ECO:0000303" key="33">
    <source>
    </source>
</evidence>
<evidence type="ECO:0000305" key="34"/>
<evidence type="ECO:0000305" key="35">
    <source>
    </source>
</evidence>
<evidence type="ECO:0000305" key="36">
    <source>
    </source>
</evidence>
<evidence type="ECO:0000305" key="37">
    <source>
    </source>
</evidence>
<evidence type="ECO:0000305" key="38">
    <source>
    </source>
</evidence>
<evidence type="ECO:0000312" key="39">
    <source>
        <dbReference type="MGI" id="MGI:103038"/>
    </source>
</evidence>
<evidence type="ECO:0007744" key="40">
    <source>
    </source>
</evidence>
<evidence type="ECO:0007744" key="41">
    <source>
    </source>
</evidence>
<evidence type="ECO:0007829" key="42">
    <source>
        <dbReference type="PDB" id="1BG1"/>
    </source>
</evidence>
<evidence type="ECO:0007829" key="43">
    <source>
        <dbReference type="PDB" id="3CWG"/>
    </source>
</evidence>
<evidence type="ECO:0007829" key="44">
    <source>
        <dbReference type="PDB" id="4E68"/>
    </source>
</evidence>
<evidence type="ECO:0007829" key="45">
    <source>
        <dbReference type="PDB" id="4ZIA"/>
    </source>
</evidence>
<dbReference type="EMBL" id="L29278">
    <property type="protein sequence ID" value="AAA37254.1"/>
    <property type="molecule type" value="mRNA"/>
</dbReference>
<dbReference type="EMBL" id="U08378">
    <property type="protein sequence ID" value="AAA56668.1"/>
    <property type="molecule type" value="mRNA"/>
</dbReference>
<dbReference type="EMBL" id="U06922">
    <property type="protein sequence ID" value="AAA19452.1"/>
    <property type="molecule type" value="mRNA"/>
</dbReference>
<dbReference type="EMBL" id="U30709">
    <property type="protein sequence ID" value="AAC52612.1"/>
    <property type="molecule type" value="mRNA"/>
</dbReference>
<dbReference type="EMBL" id="AF246978">
    <property type="protein sequence ID" value="AAL59017.1"/>
    <property type="molecule type" value="Genomic_DNA"/>
</dbReference>
<dbReference type="EMBL" id="AY299489">
    <property type="protein sequence ID" value="AAQ75418.1"/>
    <property type="molecule type" value="mRNA"/>
</dbReference>
<dbReference type="EMBL" id="AY299490">
    <property type="protein sequence ID" value="AAQ75419.1"/>
    <property type="molecule type" value="mRNA"/>
</dbReference>
<dbReference type="EMBL" id="AL591466">
    <property type="status" value="NOT_ANNOTATED_CDS"/>
    <property type="molecule type" value="Genomic_DNA"/>
</dbReference>
<dbReference type="EMBL" id="BC003806">
    <property type="protein sequence ID" value="AAH03806.1"/>
    <property type="molecule type" value="mRNA"/>
</dbReference>
<dbReference type="CCDS" id="CCDS25440.1">
    <molecule id="P42227-1"/>
</dbReference>
<dbReference type="CCDS" id="CCDS25441.1">
    <molecule id="P42227-2"/>
</dbReference>
<dbReference type="CCDS" id="CCDS48934.1">
    <molecule id="P42227-3"/>
</dbReference>
<dbReference type="PIR" id="I49508">
    <property type="entry name" value="I49508"/>
</dbReference>
<dbReference type="RefSeq" id="NP_035616.1">
    <molecule id="P42227-2"/>
    <property type="nucleotide sequence ID" value="NM_011486.6"/>
</dbReference>
<dbReference type="RefSeq" id="NP_998824.1">
    <molecule id="P42227-1"/>
    <property type="nucleotide sequence ID" value="NM_213659.4"/>
</dbReference>
<dbReference type="RefSeq" id="NP_998825.1">
    <molecule id="P42227-3"/>
    <property type="nucleotide sequence ID" value="NM_213660.4"/>
</dbReference>
<dbReference type="PDB" id="1BG1">
    <property type="method" value="X-ray"/>
    <property type="resolution" value="2.25 A"/>
    <property type="chains" value="A=127-715"/>
</dbReference>
<dbReference type="PDB" id="3CWG">
    <property type="method" value="X-ray"/>
    <property type="resolution" value="3.05 A"/>
    <property type="chains" value="A/B=127-688"/>
</dbReference>
<dbReference type="PDB" id="4E68">
    <property type="method" value="X-ray"/>
    <property type="resolution" value="2.58 A"/>
    <property type="chains" value="A=127-715"/>
</dbReference>
<dbReference type="PDB" id="4ZIA">
    <property type="method" value="X-ray"/>
    <property type="resolution" value="2.70 A"/>
    <property type="chains" value="A/B/C/D/E=3-127"/>
</dbReference>
<dbReference type="PDBsum" id="1BG1"/>
<dbReference type="PDBsum" id="3CWG"/>
<dbReference type="PDBsum" id="4E68"/>
<dbReference type="PDBsum" id="4ZIA"/>
<dbReference type="SMR" id="P42227"/>
<dbReference type="BioGRID" id="203523">
    <property type="interactions" value="36"/>
</dbReference>
<dbReference type="CORUM" id="P42227"/>
<dbReference type="DIP" id="DIP-442N"/>
<dbReference type="FunCoup" id="P42227">
    <property type="interactions" value="2612"/>
</dbReference>
<dbReference type="IntAct" id="P42227">
    <property type="interactions" value="31"/>
</dbReference>
<dbReference type="MINT" id="P42227"/>
<dbReference type="STRING" id="10090.ENSMUSP00000120152"/>
<dbReference type="BindingDB" id="P42227"/>
<dbReference type="ChEMBL" id="CHEMBL5402"/>
<dbReference type="MoonDB" id="P42227">
    <property type="type" value="Predicted"/>
</dbReference>
<dbReference type="MoonProt" id="P42227"/>
<dbReference type="GlyGen" id="P42227">
    <property type="glycosylation" value="6 sites, 1 N-linked glycan (1 site), 1 O-linked glycan (4 sites)"/>
</dbReference>
<dbReference type="iPTMnet" id="P42227"/>
<dbReference type="PhosphoSitePlus" id="P42227"/>
<dbReference type="SwissPalm" id="P42227"/>
<dbReference type="jPOST" id="P42227"/>
<dbReference type="PaxDb" id="10090-ENSMUSP00000120152"/>
<dbReference type="PeptideAtlas" id="P42227"/>
<dbReference type="ProteomicsDB" id="258659">
    <molecule id="P42227-1"/>
</dbReference>
<dbReference type="ProteomicsDB" id="258660">
    <molecule id="P42227-2"/>
</dbReference>
<dbReference type="ProteomicsDB" id="258661">
    <molecule id="P42227-3"/>
</dbReference>
<dbReference type="Pumba" id="P42227"/>
<dbReference type="ABCD" id="P42227">
    <property type="antibodies" value="1 sequenced antibody"/>
</dbReference>
<dbReference type="Antibodypedia" id="660">
    <property type="antibodies" value="2579 antibodies from 55 providers"/>
</dbReference>
<dbReference type="DNASU" id="20848"/>
<dbReference type="Ensembl" id="ENSMUST00000092671.12">
    <molecule id="P42227-3"/>
    <property type="protein sequence ID" value="ENSMUSP00000090342.6"/>
    <property type="gene ID" value="ENSMUSG00000004040.17"/>
</dbReference>
<dbReference type="Ensembl" id="ENSMUST00000103114.8">
    <molecule id="P42227-2"/>
    <property type="protein sequence ID" value="ENSMUSP00000099403.2"/>
    <property type="gene ID" value="ENSMUSG00000004040.17"/>
</dbReference>
<dbReference type="Ensembl" id="ENSMUST00000127638.8">
    <molecule id="P42227-1"/>
    <property type="protein sequence ID" value="ENSMUSP00000120152.2"/>
    <property type="gene ID" value="ENSMUSG00000004040.17"/>
</dbReference>
<dbReference type="GeneID" id="20848"/>
<dbReference type="KEGG" id="mmu:20848"/>
<dbReference type="UCSC" id="uc007lmp.1">
    <molecule id="P42227-1"/>
    <property type="organism name" value="mouse"/>
</dbReference>
<dbReference type="UCSC" id="uc007lmq.1">
    <molecule id="P42227-3"/>
    <property type="organism name" value="mouse"/>
</dbReference>
<dbReference type="AGR" id="MGI:103038"/>
<dbReference type="CTD" id="6774"/>
<dbReference type="MGI" id="MGI:103038">
    <property type="gene designation" value="Stat3"/>
</dbReference>
<dbReference type="VEuPathDB" id="HostDB:ENSMUSG00000004040"/>
<dbReference type="eggNOG" id="KOG3667">
    <property type="taxonomic scope" value="Eukaryota"/>
</dbReference>
<dbReference type="GeneTree" id="ENSGT01050000244905"/>
<dbReference type="HOGENOM" id="CLU_014189_3_0_1"/>
<dbReference type="InParanoid" id="P42227"/>
<dbReference type="OMA" id="DCANSPM"/>
<dbReference type="OrthoDB" id="19300at2759"/>
<dbReference type="PhylomeDB" id="P42227"/>
<dbReference type="TreeFam" id="TF318648"/>
<dbReference type="Reactome" id="R-MMU-1059683">
    <property type="pathway name" value="Interleukin-6 signaling"/>
</dbReference>
<dbReference type="Reactome" id="R-MMU-1266695">
    <property type="pathway name" value="Interleukin-7 signaling"/>
</dbReference>
<dbReference type="Reactome" id="R-MMU-1433557">
    <property type="pathway name" value="Signaling by SCF-KIT"/>
</dbReference>
<dbReference type="Reactome" id="R-MMU-186763">
    <property type="pathway name" value="Downstream signal transduction"/>
</dbReference>
<dbReference type="Reactome" id="R-MMU-201556">
    <property type="pathway name" value="Signaling by ALK"/>
</dbReference>
<dbReference type="Reactome" id="R-MMU-6783783">
    <property type="pathway name" value="Interleukin-10 signaling"/>
</dbReference>
<dbReference type="Reactome" id="R-MMU-6785807">
    <property type="pathway name" value="Interleukin-4 and Interleukin-13 signaling"/>
</dbReference>
<dbReference type="Reactome" id="R-MMU-8849474">
    <property type="pathway name" value="PTK6 Activates STAT3"/>
</dbReference>
<dbReference type="Reactome" id="R-MMU-8854691">
    <property type="pathway name" value="Interleukin-20 family signaling"/>
</dbReference>
<dbReference type="Reactome" id="R-MMU-8875791">
    <property type="pathway name" value="MET activates STAT3"/>
</dbReference>
<dbReference type="Reactome" id="R-MMU-8983432">
    <property type="pathway name" value="Interleukin-15 signaling"/>
</dbReference>
<dbReference type="Reactome" id="R-MMU-8984722">
    <property type="pathway name" value="Interleukin-35 Signalling"/>
</dbReference>
<dbReference type="Reactome" id="R-MMU-8985947">
    <property type="pathway name" value="Interleukin-9 signaling"/>
</dbReference>
<dbReference type="Reactome" id="R-MMU-9008059">
    <property type="pathway name" value="Interleukin-37 signaling"/>
</dbReference>
<dbReference type="Reactome" id="R-MMU-9020933">
    <property type="pathway name" value="Interleukin-23 signaling"/>
</dbReference>
<dbReference type="Reactome" id="R-MMU-9020956">
    <property type="pathway name" value="Interleukin-27 signaling"/>
</dbReference>
<dbReference type="Reactome" id="R-MMU-9020958">
    <property type="pathway name" value="Interleukin-21 signaling"/>
</dbReference>
<dbReference type="Reactome" id="R-MMU-9701898">
    <property type="pathway name" value="STAT3 nuclear events downstream of ALK signaling"/>
</dbReference>
<dbReference type="Reactome" id="R-MMU-9833482">
    <property type="pathway name" value="PKR-mediated signaling"/>
</dbReference>
<dbReference type="BioGRID-ORCS" id="20848">
    <property type="hits" value="4 hits in 87 CRISPR screens"/>
</dbReference>
<dbReference type="ChiTaRS" id="Stat3">
    <property type="organism name" value="mouse"/>
</dbReference>
<dbReference type="EvolutionaryTrace" id="P42227"/>
<dbReference type="PRO" id="PR:P42227"/>
<dbReference type="Proteomes" id="UP000000589">
    <property type="component" value="Chromosome 11"/>
</dbReference>
<dbReference type="RNAct" id="P42227">
    <property type="molecule type" value="protein"/>
</dbReference>
<dbReference type="Bgee" id="ENSMUSG00000004040">
    <property type="expression patterns" value="Expressed in right lung lobe and 293 other cell types or tissues"/>
</dbReference>
<dbReference type="ExpressionAtlas" id="P42227">
    <property type="expression patterns" value="baseline and differential"/>
</dbReference>
<dbReference type="GO" id="GO:0000785">
    <property type="term" value="C:chromatin"/>
    <property type="evidence" value="ECO:0007669"/>
    <property type="project" value="Ensembl"/>
</dbReference>
<dbReference type="GO" id="GO:0005737">
    <property type="term" value="C:cytoplasm"/>
    <property type="evidence" value="ECO:0000314"/>
    <property type="project" value="UniProtKB"/>
</dbReference>
<dbReference type="GO" id="GO:0005829">
    <property type="term" value="C:cytosol"/>
    <property type="evidence" value="ECO:0000304"/>
    <property type="project" value="Reactome"/>
</dbReference>
<dbReference type="GO" id="GO:0098978">
    <property type="term" value="C:glutamatergic synapse"/>
    <property type="evidence" value="ECO:0007669"/>
    <property type="project" value="Ensembl"/>
</dbReference>
<dbReference type="GO" id="GO:0005743">
    <property type="term" value="C:mitochondrial inner membrane"/>
    <property type="evidence" value="ECO:0007669"/>
    <property type="project" value="Ensembl"/>
</dbReference>
<dbReference type="GO" id="GO:0005654">
    <property type="term" value="C:nucleoplasm"/>
    <property type="evidence" value="ECO:0000304"/>
    <property type="project" value="Reactome"/>
</dbReference>
<dbReference type="GO" id="GO:0005634">
    <property type="term" value="C:nucleus"/>
    <property type="evidence" value="ECO:0000314"/>
    <property type="project" value="UniProtKB"/>
</dbReference>
<dbReference type="GO" id="GO:0005886">
    <property type="term" value="C:plasma membrane"/>
    <property type="evidence" value="ECO:0000314"/>
    <property type="project" value="MGI"/>
</dbReference>
<dbReference type="GO" id="GO:0014069">
    <property type="term" value="C:postsynaptic density"/>
    <property type="evidence" value="ECO:0007669"/>
    <property type="project" value="Ensembl"/>
</dbReference>
<dbReference type="GO" id="GO:0032991">
    <property type="term" value="C:protein-containing complex"/>
    <property type="evidence" value="ECO:0000314"/>
    <property type="project" value="MGI"/>
</dbReference>
<dbReference type="GO" id="GO:0090575">
    <property type="term" value="C:RNA polymerase II transcription regulator complex"/>
    <property type="evidence" value="ECO:0007669"/>
    <property type="project" value="Ensembl"/>
</dbReference>
<dbReference type="GO" id="GO:0098685">
    <property type="term" value="C:Schaffer collateral - CA1 synapse"/>
    <property type="evidence" value="ECO:0007669"/>
    <property type="project" value="Ensembl"/>
</dbReference>
<dbReference type="GO" id="GO:0005667">
    <property type="term" value="C:transcription regulator complex"/>
    <property type="evidence" value="ECO:0000314"/>
    <property type="project" value="MGI"/>
</dbReference>
<dbReference type="GO" id="GO:0140033">
    <property type="term" value="F:acetylation-dependent protein binding"/>
    <property type="evidence" value="ECO:0000250"/>
    <property type="project" value="UniProtKB"/>
</dbReference>
<dbReference type="GO" id="GO:0031730">
    <property type="term" value="F:CCR5 chemokine receptor binding"/>
    <property type="evidence" value="ECO:0007669"/>
    <property type="project" value="Ensembl"/>
</dbReference>
<dbReference type="GO" id="GO:0031490">
    <property type="term" value="F:chromatin DNA binding"/>
    <property type="evidence" value="ECO:0000250"/>
    <property type="project" value="UniProtKB"/>
</dbReference>
<dbReference type="GO" id="GO:0003677">
    <property type="term" value="F:DNA binding"/>
    <property type="evidence" value="ECO:0000314"/>
    <property type="project" value="MGI"/>
</dbReference>
<dbReference type="GO" id="GO:0001228">
    <property type="term" value="F:DNA-binding transcription activator activity, RNA polymerase II-specific"/>
    <property type="evidence" value="ECO:0007669"/>
    <property type="project" value="Ensembl"/>
</dbReference>
<dbReference type="GO" id="GO:0003700">
    <property type="term" value="F:DNA-binding transcription factor activity"/>
    <property type="evidence" value="ECO:0000315"/>
    <property type="project" value="UniProtKB"/>
</dbReference>
<dbReference type="GO" id="GO:0000981">
    <property type="term" value="F:DNA-binding transcription factor activity, RNA polymerase II-specific"/>
    <property type="evidence" value="ECO:0000314"/>
    <property type="project" value="MGI"/>
</dbReference>
<dbReference type="GO" id="GO:0140297">
    <property type="term" value="F:DNA-binding transcription factor binding"/>
    <property type="evidence" value="ECO:0000250"/>
    <property type="project" value="UniProtKB"/>
</dbReference>
<dbReference type="GO" id="GO:0042802">
    <property type="term" value="F:identical protein binding"/>
    <property type="evidence" value="ECO:0000353"/>
    <property type="project" value="IntAct"/>
</dbReference>
<dbReference type="GO" id="GO:0106222">
    <property type="term" value="F:lncRNA binding"/>
    <property type="evidence" value="ECO:0007669"/>
    <property type="project" value="Ensembl"/>
</dbReference>
<dbReference type="GO" id="GO:0035259">
    <property type="term" value="F:nuclear glucocorticoid receptor binding"/>
    <property type="evidence" value="ECO:0007669"/>
    <property type="project" value="Ensembl"/>
</dbReference>
<dbReference type="GO" id="GO:0004879">
    <property type="term" value="F:nuclear receptor activity"/>
    <property type="evidence" value="ECO:0007669"/>
    <property type="project" value="Ensembl"/>
</dbReference>
<dbReference type="GO" id="GO:0070878">
    <property type="term" value="F:primary miRNA binding"/>
    <property type="evidence" value="ECO:0007669"/>
    <property type="project" value="Ensembl"/>
</dbReference>
<dbReference type="GO" id="GO:0046983">
    <property type="term" value="F:protein dimerization activity"/>
    <property type="evidence" value="ECO:0000353"/>
    <property type="project" value="MGI"/>
</dbReference>
<dbReference type="GO" id="GO:0042803">
    <property type="term" value="F:protein homodimerization activity"/>
    <property type="evidence" value="ECO:0000314"/>
    <property type="project" value="UniProtKB"/>
</dbReference>
<dbReference type="GO" id="GO:0019901">
    <property type="term" value="F:protein kinase binding"/>
    <property type="evidence" value="ECO:0000353"/>
    <property type="project" value="UniProtKB"/>
</dbReference>
<dbReference type="GO" id="GO:0019903">
    <property type="term" value="F:protein phosphatase binding"/>
    <property type="evidence" value="ECO:0007669"/>
    <property type="project" value="Ensembl"/>
</dbReference>
<dbReference type="GO" id="GO:0140311">
    <property type="term" value="F:protein sequestering activity"/>
    <property type="evidence" value="ECO:0000314"/>
    <property type="project" value="UniProtKB"/>
</dbReference>
<dbReference type="GO" id="GO:0000978">
    <property type="term" value="F:RNA polymerase II cis-regulatory region sequence-specific DNA binding"/>
    <property type="evidence" value="ECO:0007669"/>
    <property type="project" value="Ensembl"/>
</dbReference>
<dbReference type="GO" id="GO:0140610">
    <property type="term" value="F:RNA sequestering activity"/>
    <property type="evidence" value="ECO:0007669"/>
    <property type="project" value="Ensembl"/>
</dbReference>
<dbReference type="GO" id="GO:0043565">
    <property type="term" value="F:sequence-specific DNA binding"/>
    <property type="evidence" value="ECO:0000314"/>
    <property type="project" value="MGI"/>
</dbReference>
<dbReference type="GO" id="GO:0035591">
    <property type="term" value="F:signaling adaptor activity"/>
    <property type="evidence" value="ECO:0007669"/>
    <property type="project" value="Ensembl"/>
</dbReference>
<dbReference type="GO" id="GO:0000976">
    <property type="term" value="F:transcription cis-regulatory region binding"/>
    <property type="evidence" value="ECO:0000314"/>
    <property type="project" value="UniProtKB"/>
</dbReference>
<dbReference type="GO" id="GO:0006953">
    <property type="term" value="P:acute-phase response"/>
    <property type="evidence" value="ECO:0007669"/>
    <property type="project" value="UniProtKB-KW"/>
</dbReference>
<dbReference type="GO" id="GO:0048708">
    <property type="term" value="P:astrocyte differentiation"/>
    <property type="evidence" value="ECO:0000315"/>
    <property type="project" value="UniProtKB"/>
</dbReference>
<dbReference type="GO" id="GO:0008283">
    <property type="term" value="P:cell population proliferation"/>
    <property type="evidence" value="ECO:0000314"/>
    <property type="project" value="MGI"/>
</dbReference>
<dbReference type="GO" id="GO:0007259">
    <property type="term" value="P:cell surface receptor signaling pathway via JAK-STAT"/>
    <property type="evidence" value="ECO:0000304"/>
    <property type="project" value="UniProtKB"/>
</dbReference>
<dbReference type="GO" id="GO:0071345">
    <property type="term" value="P:cellular response to cytokine stimulus"/>
    <property type="evidence" value="ECO:0000266"/>
    <property type="project" value="MGI"/>
</dbReference>
<dbReference type="GO" id="GO:0097398">
    <property type="term" value="P:cellular response to interleukin-17"/>
    <property type="evidence" value="ECO:0000314"/>
    <property type="project" value="MGI"/>
</dbReference>
<dbReference type="GO" id="GO:0044320">
    <property type="term" value="P:cellular response to leptin stimulus"/>
    <property type="evidence" value="ECO:0000250"/>
    <property type="project" value="UniProtKB"/>
</dbReference>
<dbReference type="GO" id="GO:0019221">
    <property type="term" value="P:cytokine-mediated signaling pathway"/>
    <property type="evidence" value="ECO:0000303"/>
    <property type="project" value="UniProtKB"/>
</dbReference>
<dbReference type="GO" id="GO:0042755">
    <property type="term" value="P:eating behavior"/>
    <property type="evidence" value="ECO:0000315"/>
    <property type="project" value="MGI"/>
</dbReference>
<dbReference type="GO" id="GO:0097009">
    <property type="term" value="P:energy homeostasis"/>
    <property type="evidence" value="ECO:0000315"/>
    <property type="project" value="UniProtKB"/>
</dbReference>
<dbReference type="GO" id="GO:0010467">
    <property type="term" value="P:gene expression"/>
    <property type="evidence" value="ECO:0000315"/>
    <property type="project" value="MGI"/>
</dbReference>
<dbReference type="GO" id="GO:0042593">
    <property type="term" value="P:glucose homeostasis"/>
    <property type="evidence" value="ECO:0000315"/>
    <property type="project" value="UniProtKB"/>
</dbReference>
<dbReference type="GO" id="GO:0060397">
    <property type="term" value="P:growth hormone receptor signaling pathway via JAK-STAT"/>
    <property type="evidence" value="ECO:0000314"/>
    <property type="project" value="BHF-UCL"/>
</dbReference>
<dbReference type="GO" id="GO:0006954">
    <property type="term" value="P:inflammatory response"/>
    <property type="evidence" value="ECO:0000315"/>
    <property type="project" value="UniProtKB"/>
</dbReference>
<dbReference type="GO" id="GO:0140105">
    <property type="term" value="P:interleukin-10-mediated signaling pathway"/>
    <property type="evidence" value="ECO:0007669"/>
    <property type="project" value="Ensembl"/>
</dbReference>
<dbReference type="GO" id="GO:0038154">
    <property type="term" value="P:interleukin-11-mediated signaling pathway"/>
    <property type="evidence" value="ECO:0007669"/>
    <property type="project" value="Ensembl"/>
</dbReference>
<dbReference type="GO" id="GO:0035723">
    <property type="term" value="P:interleukin-15-mediated signaling pathway"/>
    <property type="evidence" value="ECO:0007669"/>
    <property type="project" value="Ensembl"/>
</dbReference>
<dbReference type="GO" id="GO:0038110">
    <property type="term" value="P:interleukin-2-mediated signaling pathway"/>
    <property type="evidence" value="ECO:0007669"/>
    <property type="project" value="Ensembl"/>
</dbReference>
<dbReference type="GO" id="GO:0038155">
    <property type="term" value="P:interleukin-23-mediated signaling pathway"/>
    <property type="evidence" value="ECO:0007669"/>
    <property type="project" value="Ensembl"/>
</dbReference>
<dbReference type="GO" id="GO:0070102">
    <property type="term" value="P:interleukin-6-mediated signaling pathway"/>
    <property type="evidence" value="ECO:0000250"/>
    <property type="project" value="UniProtKB"/>
</dbReference>
<dbReference type="GO" id="GO:0038113">
    <property type="term" value="P:interleukin-9-mediated signaling pathway"/>
    <property type="evidence" value="ECO:0007669"/>
    <property type="project" value="Ensembl"/>
</dbReference>
<dbReference type="GO" id="GO:0033210">
    <property type="term" value="P:leptin-mediated signaling pathway"/>
    <property type="evidence" value="ECO:0000314"/>
    <property type="project" value="UniProtKB"/>
</dbReference>
<dbReference type="GO" id="GO:0050804">
    <property type="term" value="P:modulation of chemical synaptic transmission"/>
    <property type="evidence" value="ECO:0007669"/>
    <property type="project" value="Ensembl"/>
</dbReference>
<dbReference type="GO" id="GO:0042789">
    <property type="term" value="P:mRNA transcription by RNA polymerase II"/>
    <property type="evidence" value="ECO:0000314"/>
    <property type="project" value="MGI"/>
</dbReference>
<dbReference type="GO" id="GO:0010507">
    <property type="term" value="P:negative regulation of autophagy"/>
    <property type="evidence" value="ECO:0007669"/>
    <property type="project" value="Ensembl"/>
</dbReference>
<dbReference type="GO" id="GO:0043124">
    <property type="term" value="P:negative regulation of canonical NF-kappaB signal transduction"/>
    <property type="evidence" value="ECO:0000314"/>
    <property type="project" value="UniProtKB"/>
</dbReference>
<dbReference type="GO" id="GO:0008285">
    <property type="term" value="P:negative regulation of cell population proliferation"/>
    <property type="evidence" value="ECO:0000316"/>
    <property type="project" value="MGI"/>
</dbReference>
<dbReference type="GO" id="GO:1900016">
    <property type="term" value="P:negative regulation of cytokine production involved in inflammatory response"/>
    <property type="evidence" value="ECO:0000314"/>
    <property type="project" value="UniProtKB"/>
</dbReference>
<dbReference type="GO" id="GO:0045820">
    <property type="term" value="P:negative regulation of glycolytic process"/>
    <property type="evidence" value="ECO:0000315"/>
    <property type="project" value="MGI"/>
</dbReference>
<dbReference type="GO" id="GO:0010730">
    <property type="term" value="P:negative regulation of hydrogen peroxide biosynthetic process"/>
    <property type="evidence" value="ECO:0007669"/>
    <property type="project" value="Ensembl"/>
</dbReference>
<dbReference type="GO" id="GO:0050728">
    <property type="term" value="P:negative regulation of inflammatory response"/>
    <property type="evidence" value="ECO:0000314"/>
    <property type="project" value="UniProt"/>
</dbReference>
<dbReference type="GO" id="GO:0106015">
    <property type="term" value="P:negative regulation of inflammatory response to wounding"/>
    <property type="evidence" value="ECO:0000314"/>
    <property type="project" value="UniProt"/>
</dbReference>
<dbReference type="GO" id="GO:2001223">
    <property type="term" value="P:negative regulation of neuron migration"/>
    <property type="evidence" value="ECO:0000316"/>
    <property type="project" value="MGI"/>
</dbReference>
<dbReference type="GO" id="GO:2000635">
    <property type="term" value="P:negative regulation of primary miRNA processing"/>
    <property type="evidence" value="ECO:0007669"/>
    <property type="project" value="Ensembl"/>
</dbReference>
<dbReference type="GO" id="GO:2000737">
    <property type="term" value="P:negative regulation of stem cell differentiation"/>
    <property type="evidence" value="ECO:0000315"/>
    <property type="project" value="MGI"/>
</dbReference>
<dbReference type="GO" id="GO:0043491">
    <property type="term" value="P:phosphatidylinositol 3-kinase/protein kinase B signal transduction"/>
    <property type="evidence" value="ECO:0000314"/>
    <property type="project" value="UniProt"/>
</dbReference>
<dbReference type="GO" id="GO:0016310">
    <property type="term" value="P:phosphorylation"/>
    <property type="evidence" value="ECO:0000314"/>
    <property type="project" value="UniProtKB"/>
</dbReference>
<dbReference type="GO" id="GO:0045766">
    <property type="term" value="P:positive regulation of angiogenesis"/>
    <property type="evidence" value="ECO:0000314"/>
    <property type="project" value="BHF-UCL"/>
</dbReference>
<dbReference type="GO" id="GO:2001171">
    <property type="term" value="P:positive regulation of ATP biosynthetic process"/>
    <property type="evidence" value="ECO:0007669"/>
    <property type="project" value="Ensembl"/>
</dbReference>
<dbReference type="GO" id="GO:0043123">
    <property type="term" value="P:positive regulation of canonical NF-kappaB signal transduction"/>
    <property type="evidence" value="ECO:0007669"/>
    <property type="project" value="Ensembl"/>
</dbReference>
<dbReference type="GO" id="GO:0030335">
    <property type="term" value="P:positive regulation of cell migration"/>
    <property type="evidence" value="ECO:0007669"/>
    <property type="project" value="Ensembl"/>
</dbReference>
<dbReference type="GO" id="GO:1900017">
    <property type="term" value="P:positive regulation of cytokine production involved in inflammatory response"/>
    <property type="evidence" value="ECO:0007669"/>
    <property type="project" value="Ensembl"/>
</dbReference>
<dbReference type="GO" id="GO:0045893">
    <property type="term" value="P:positive regulation of DNA-templated transcription"/>
    <property type="evidence" value="ECO:0000314"/>
    <property type="project" value="UniProtKB"/>
</dbReference>
<dbReference type="GO" id="GO:0045648">
    <property type="term" value="P:positive regulation of erythrocyte differentiation"/>
    <property type="evidence" value="ECO:0000250"/>
    <property type="project" value="UniProtKB"/>
</dbReference>
<dbReference type="GO" id="GO:0010628">
    <property type="term" value="P:positive regulation of gene expression"/>
    <property type="evidence" value="ECO:0000316"/>
    <property type="project" value="BHF-UCL"/>
</dbReference>
<dbReference type="GO" id="GO:1902728">
    <property type="term" value="P:positive regulation of growth factor dependent skeletal muscle satellite cell proliferation"/>
    <property type="evidence" value="ECO:0007669"/>
    <property type="project" value="Ensembl"/>
</dbReference>
<dbReference type="GO" id="GO:0032731">
    <property type="term" value="P:positive regulation of interleukin-1 beta production"/>
    <property type="evidence" value="ECO:0007669"/>
    <property type="project" value="Ensembl"/>
</dbReference>
<dbReference type="GO" id="GO:0032733">
    <property type="term" value="P:positive regulation of interleukin-10 production"/>
    <property type="evidence" value="ECO:0007669"/>
    <property type="project" value="Ensembl"/>
</dbReference>
<dbReference type="GO" id="GO:0032755">
    <property type="term" value="P:positive regulation of interleukin-6 production"/>
    <property type="evidence" value="ECO:0007669"/>
    <property type="project" value="Ensembl"/>
</dbReference>
<dbReference type="GO" id="GO:0032757">
    <property type="term" value="P:positive regulation of interleukin-8 production"/>
    <property type="evidence" value="ECO:0007669"/>
    <property type="project" value="Ensembl"/>
</dbReference>
<dbReference type="GO" id="GO:1902895">
    <property type="term" value="P:positive regulation of miRNA transcription"/>
    <property type="evidence" value="ECO:0000315"/>
    <property type="project" value="BHF-UCL"/>
</dbReference>
<dbReference type="GO" id="GO:0045747">
    <property type="term" value="P:positive regulation of Notch signaling pathway"/>
    <property type="evidence" value="ECO:0000315"/>
    <property type="project" value="UniProtKB"/>
</dbReference>
<dbReference type="GO" id="GO:0050766">
    <property type="term" value="P:positive regulation of phagocytosis"/>
    <property type="evidence" value="ECO:0007669"/>
    <property type="project" value="Ensembl"/>
</dbReference>
<dbReference type="GO" id="GO:0045944">
    <property type="term" value="P:positive regulation of transcription by RNA polymerase II"/>
    <property type="evidence" value="ECO:0000314"/>
    <property type="project" value="UniProtKB"/>
</dbReference>
<dbReference type="GO" id="GO:0032760">
    <property type="term" value="P:positive regulation of tumor necrosis factor production"/>
    <property type="evidence" value="ECO:0007669"/>
    <property type="project" value="Ensembl"/>
</dbReference>
<dbReference type="GO" id="GO:1905564">
    <property type="term" value="P:positive regulation of vascular endothelial cell proliferation"/>
    <property type="evidence" value="ECO:0000314"/>
    <property type="project" value="BHF-UCL"/>
</dbReference>
<dbReference type="GO" id="GO:0010575">
    <property type="term" value="P:positive regulation of vascular endothelial growth factor production"/>
    <property type="evidence" value="ECO:0007669"/>
    <property type="project" value="Ensembl"/>
</dbReference>
<dbReference type="GO" id="GO:0099527">
    <property type="term" value="P:postsynapse to nucleus signaling pathway"/>
    <property type="evidence" value="ECO:0007669"/>
    <property type="project" value="Ensembl"/>
</dbReference>
<dbReference type="GO" id="GO:0006606">
    <property type="term" value="P:protein import into nucleus"/>
    <property type="evidence" value="ECO:0000250"/>
    <property type="project" value="UniProtKB"/>
</dbReference>
<dbReference type="GO" id="GO:0060019">
    <property type="term" value="P:radial glial cell differentiation"/>
    <property type="evidence" value="ECO:0000315"/>
    <property type="project" value="UniProtKB"/>
</dbReference>
<dbReference type="GO" id="GO:0051726">
    <property type="term" value="P:regulation of cell cycle"/>
    <property type="evidence" value="ECO:0000314"/>
    <property type="project" value="UniProtKB"/>
</dbReference>
<dbReference type="GO" id="GO:1900037">
    <property type="term" value="P:regulation of cellular response to hypoxia"/>
    <property type="evidence" value="ECO:0007669"/>
    <property type="project" value="Ensembl"/>
</dbReference>
<dbReference type="GO" id="GO:0006355">
    <property type="term" value="P:regulation of DNA-templated transcription"/>
    <property type="evidence" value="ECO:0000303"/>
    <property type="project" value="UniProtKB"/>
</dbReference>
<dbReference type="GO" id="GO:0060259">
    <property type="term" value="P:regulation of feeding behavior"/>
    <property type="evidence" value="ECO:0000315"/>
    <property type="project" value="UniProtKB"/>
</dbReference>
<dbReference type="GO" id="GO:0046902">
    <property type="term" value="P:regulation of mitochondrial membrane permeability"/>
    <property type="evidence" value="ECO:0007669"/>
    <property type="project" value="Ensembl"/>
</dbReference>
<dbReference type="GO" id="GO:0040014">
    <property type="term" value="P:regulation of multicellular organism growth"/>
    <property type="evidence" value="ECO:0000315"/>
    <property type="project" value="MGI"/>
</dbReference>
<dbReference type="GO" id="GO:0032355">
    <property type="term" value="P:response to estradiol"/>
    <property type="evidence" value="ECO:0007669"/>
    <property type="project" value="Ensembl"/>
</dbReference>
<dbReference type="GO" id="GO:0045471">
    <property type="term" value="P:response to ethanol"/>
    <property type="evidence" value="ECO:0007669"/>
    <property type="project" value="Ensembl"/>
</dbReference>
<dbReference type="GO" id="GO:0001666">
    <property type="term" value="P:response to hypoxia"/>
    <property type="evidence" value="ECO:0007669"/>
    <property type="project" value="Ensembl"/>
</dbReference>
<dbReference type="GO" id="GO:0002931">
    <property type="term" value="P:response to ischemia"/>
    <property type="evidence" value="ECO:0007669"/>
    <property type="project" value="Ensembl"/>
</dbReference>
<dbReference type="GO" id="GO:0044321">
    <property type="term" value="P:response to leptin"/>
    <property type="evidence" value="ECO:0000314"/>
    <property type="project" value="UniProtKB"/>
</dbReference>
<dbReference type="GO" id="GO:0009410">
    <property type="term" value="P:response to xenobiotic stimulus"/>
    <property type="evidence" value="ECO:0007669"/>
    <property type="project" value="Ensembl"/>
</dbReference>
<dbReference type="GO" id="GO:0060221">
    <property type="term" value="P:retinal rod cell differentiation"/>
    <property type="evidence" value="ECO:0000315"/>
    <property type="project" value="MGI"/>
</dbReference>
<dbReference type="GO" id="GO:0019953">
    <property type="term" value="P:sexual reproduction"/>
    <property type="evidence" value="ECO:0000315"/>
    <property type="project" value="MGI"/>
</dbReference>
<dbReference type="GO" id="GO:0035019">
    <property type="term" value="P:somatic stem cell population maintenance"/>
    <property type="evidence" value="ECO:0000315"/>
    <property type="project" value="MGI"/>
</dbReference>
<dbReference type="GO" id="GO:0072540">
    <property type="term" value="P:T-helper 17 cell lineage commitment"/>
    <property type="evidence" value="ECO:0000315"/>
    <property type="project" value="UniProtKB"/>
</dbReference>
<dbReference type="GO" id="GO:0072538">
    <property type="term" value="P:T-helper 17 type immune response"/>
    <property type="evidence" value="ECO:0000250"/>
    <property type="project" value="UniProtKB"/>
</dbReference>
<dbReference type="GO" id="GO:0001659">
    <property type="term" value="P:temperature homeostasis"/>
    <property type="evidence" value="ECO:0000315"/>
    <property type="project" value="MGI"/>
</dbReference>
<dbReference type="GO" id="GO:0006366">
    <property type="term" value="P:transcription by RNA polymerase II"/>
    <property type="evidence" value="ECO:0000314"/>
    <property type="project" value="MGI"/>
</dbReference>
<dbReference type="GO" id="GO:0007179">
    <property type="term" value="P:transforming growth factor beta receptor signaling pathway"/>
    <property type="evidence" value="ECO:0007669"/>
    <property type="project" value="Ensembl"/>
</dbReference>
<dbReference type="CDD" id="cd10374">
    <property type="entry name" value="SH2_STAT3"/>
    <property type="match status" value="1"/>
</dbReference>
<dbReference type="CDD" id="cd16853">
    <property type="entry name" value="STAT3_CCD"/>
    <property type="match status" value="1"/>
</dbReference>
<dbReference type="CDD" id="cd16847">
    <property type="entry name" value="STAT3_DBD"/>
    <property type="match status" value="1"/>
</dbReference>
<dbReference type="FunFam" id="1.10.238.10:FF:000012">
    <property type="entry name" value="Signal transducer and activator of transcription"/>
    <property type="match status" value="1"/>
</dbReference>
<dbReference type="FunFam" id="1.10.532.10:FF:000001">
    <property type="entry name" value="Signal transducer and activator of transcription"/>
    <property type="match status" value="1"/>
</dbReference>
<dbReference type="FunFam" id="1.20.1050.20:FF:000003">
    <property type="entry name" value="Signal transducer and activator of transcription"/>
    <property type="match status" value="1"/>
</dbReference>
<dbReference type="FunFam" id="3.30.505.10:FF:000003">
    <property type="entry name" value="Signal transducer and activator of transcription"/>
    <property type="match status" value="1"/>
</dbReference>
<dbReference type="FunFam" id="2.60.40.630:FF:000012">
    <property type="entry name" value="Signal transducer and activator of transcription 3"/>
    <property type="match status" value="1"/>
</dbReference>
<dbReference type="Gene3D" id="1.10.238.10">
    <property type="entry name" value="EF-hand"/>
    <property type="match status" value="1"/>
</dbReference>
<dbReference type="Gene3D" id="3.30.505.10">
    <property type="entry name" value="SH2 domain"/>
    <property type="match status" value="1"/>
</dbReference>
<dbReference type="Gene3D" id="1.20.1050.20">
    <property type="entry name" value="STAT transcription factor, all-alpha domain"/>
    <property type="match status" value="1"/>
</dbReference>
<dbReference type="Gene3D" id="2.60.40.630">
    <property type="entry name" value="STAT transcription factor, DNA-binding domain"/>
    <property type="match status" value="1"/>
</dbReference>
<dbReference type="Gene3D" id="1.10.532.10">
    <property type="entry name" value="STAT transcription factor, N-terminal domain"/>
    <property type="match status" value="1"/>
</dbReference>
<dbReference type="IDEAL" id="IID50277"/>
<dbReference type="InterPro" id="IPR008967">
    <property type="entry name" value="p53-like_TF_DNA-bd_sf"/>
</dbReference>
<dbReference type="InterPro" id="IPR000980">
    <property type="entry name" value="SH2"/>
</dbReference>
<dbReference type="InterPro" id="IPR036860">
    <property type="entry name" value="SH2_dom_sf"/>
</dbReference>
<dbReference type="InterPro" id="IPR001217">
    <property type="entry name" value="STAT"/>
</dbReference>
<dbReference type="InterPro" id="IPR035855">
    <property type="entry name" value="STAT3_SH2"/>
</dbReference>
<dbReference type="InterPro" id="IPR048988">
    <property type="entry name" value="STAT_linker"/>
</dbReference>
<dbReference type="InterPro" id="IPR036535">
    <property type="entry name" value="STAT_N_sf"/>
</dbReference>
<dbReference type="InterPro" id="IPR013800">
    <property type="entry name" value="STAT_TF_alpha"/>
</dbReference>
<dbReference type="InterPro" id="IPR015988">
    <property type="entry name" value="STAT_TF_coiled-coil"/>
</dbReference>
<dbReference type="InterPro" id="IPR013801">
    <property type="entry name" value="STAT_TF_DNA-bd"/>
</dbReference>
<dbReference type="InterPro" id="IPR012345">
    <property type="entry name" value="STAT_TF_DNA-bd_N"/>
</dbReference>
<dbReference type="InterPro" id="IPR013799">
    <property type="entry name" value="STAT_TF_prot_interaction"/>
</dbReference>
<dbReference type="PANTHER" id="PTHR11801">
    <property type="entry name" value="SIGNAL TRANSDUCER AND ACTIVATOR OF TRANSCRIPTION"/>
    <property type="match status" value="1"/>
</dbReference>
<dbReference type="Pfam" id="PF00017">
    <property type="entry name" value="SH2"/>
    <property type="match status" value="1"/>
</dbReference>
<dbReference type="Pfam" id="PF01017">
    <property type="entry name" value="STAT_alpha"/>
    <property type="match status" value="1"/>
</dbReference>
<dbReference type="Pfam" id="PF02864">
    <property type="entry name" value="STAT_bind"/>
    <property type="match status" value="1"/>
</dbReference>
<dbReference type="Pfam" id="PF02865">
    <property type="entry name" value="STAT_int"/>
    <property type="match status" value="1"/>
</dbReference>
<dbReference type="Pfam" id="PF21354">
    <property type="entry name" value="STAT_linker"/>
    <property type="match status" value="1"/>
</dbReference>
<dbReference type="SMART" id="SM00964">
    <property type="entry name" value="STAT_int"/>
    <property type="match status" value="1"/>
</dbReference>
<dbReference type="SUPFAM" id="SSF49417">
    <property type="entry name" value="p53-like transcription factors"/>
    <property type="match status" value="1"/>
</dbReference>
<dbReference type="SUPFAM" id="SSF55550">
    <property type="entry name" value="SH2 domain"/>
    <property type="match status" value="1"/>
</dbReference>
<dbReference type="SUPFAM" id="SSF47655">
    <property type="entry name" value="STAT"/>
    <property type="match status" value="1"/>
</dbReference>
<dbReference type="SUPFAM" id="SSF48092">
    <property type="entry name" value="Transcription factor STAT-4 N-domain"/>
    <property type="match status" value="1"/>
</dbReference>
<dbReference type="PROSITE" id="PS50001">
    <property type="entry name" value="SH2"/>
    <property type="match status" value="1"/>
</dbReference>
<reference key="1">
    <citation type="journal article" date="1994" name="Cell">
        <title>Molecular cloning of APRF, a novel IFN-stimulated gene factor 3 p91-related transcription factor involved in the gp130-mediated signaling pathway.</title>
        <authorList>
            <person name="Akira S."/>
            <person name="Nishio Y."/>
            <person name="Inoue M."/>
            <person name="Wang X.-J."/>
            <person name="Wei S."/>
            <person name="Matsusaka T."/>
            <person name="Yoshida K."/>
            <person name="Sudo T."/>
            <person name="Naruto M."/>
            <person name="Kishimoto T."/>
        </authorList>
    </citation>
    <scope>NUCLEOTIDE SEQUENCE [MRNA] (ISOFORM STAT3A)</scope>
    <scope>PROTEIN SEQUENCE OF 154-158; 181-185 AND 632-640</scope>
    <scope>TISSUE SPECIFICITY</scope>
    <source>
        <strain>BALB/cJ</strain>
        <tissue>Liver</tissue>
    </source>
</reference>
<reference key="2">
    <citation type="journal article" date="1994" name="J. Biol. Chem.">
        <title>Acute phase response factor and additional members of the interferon-stimulated gene factor 3 family integrate diverse signals from cytokines, interferons, and growth factors.</title>
        <authorList>
            <person name="Raz R."/>
            <person name="Durbin J.E."/>
            <person name="Levy D.E."/>
        </authorList>
    </citation>
    <scope>NUCLEOTIDE SEQUENCE [MRNA] (ISOFORM DEL-701)</scope>
    <source>
        <tissue>Brain</tissue>
    </source>
</reference>
<reference key="3">
    <citation type="journal article" date="1994" name="Science">
        <title>Stat3: a STAT family member activated by tyrosine phosphorylation in response to epidermal growth factor and interleukin-6.</title>
        <authorList>
            <person name="Zhong Z."/>
            <person name="Wen Z."/>
            <person name="Darnell J.E. Jr."/>
        </authorList>
    </citation>
    <scope>NUCLEOTIDE SEQUENCE [MRNA] (ISOFORM STAT3A)</scope>
    <source>
        <tissue>Thymus</tissue>
    </source>
</reference>
<reference key="4">
    <citation type="journal article" date="1995" name="Proc. Natl. Acad. Sci. U.S.A.">
        <title>Cooperative transcriptional activity of Jun and Stat3 beta, a short form of Stat3.</title>
        <authorList>
            <person name="Schaefer T.S."/>
            <person name="Sanders L.K."/>
            <person name="Nathans D."/>
        </authorList>
    </citation>
    <scope>NUCLEOTIDE SEQUENCE [MRNA] (ISOFORM STAT3B)</scope>
    <scope>TISSUE SPECIFICITY (ISOFORM STAT3B)</scope>
    <source>
        <strain>BALB/cJ</strain>
        <strain>C57BL/6J</strain>
        <tissue>Liver</tissue>
    </source>
</reference>
<reference key="5">
    <citation type="journal article" date="2001" name="Genomics">
        <title>Structure of the mouse Stat 3/5 locus: evolution from Drosophila to zebrafish to mouse.</title>
        <authorList>
            <person name="Miyoshi K."/>
            <person name="Cui Y."/>
            <person name="Riedlinger G."/>
            <person name="Robinson P."/>
            <person name="Lehoczky J."/>
            <person name="Zon L."/>
            <person name="Oka T."/>
            <person name="Dewar K."/>
            <person name="Hennighausen L."/>
        </authorList>
    </citation>
    <scope>NUCLEOTIDE SEQUENCE [GENOMIC DNA] (ISOFORM STAT3A)</scope>
    <source>
        <strain>129/SvJ</strain>
    </source>
</reference>
<reference key="6">
    <citation type="submission" date="2003-05" db="EMBL/GenBank/DDBJ databases">
        <title>A mutant Stat5b with weaker DNA binding defines a key defective pathway in non-obese diabetic (NOD) mice.</title>
        <authorList>
            <person name="Davoodi-Semiromi A."/>
            <person name="She J.-X."/>
        </authorList>
    </citation>
    <scope>NUCLEOTIDE SEQUENCE [MRNA] (ISOFORM STAT3A)</scope>
    <source>
        <strain>C57BL/6J</strain>
        <strain>NOD/LtJ</strain>
    </source>
</reference>
<reference key="7">
    <citation type="journal article" date="2009" name="PLoS Biol.">
        <title>Lineage-specific biology revealed by a finished genome assembly of the mouse.</title>
        <authorList>
            <person name="Church D.M."/>
            <person name="Goodstadt L."/>
            <person name="Hillier L.W."/>
            <person name="Zody M.C."/>
            <person name="Goldstein S."/>
            <person name="She X."/>
            <person name="Bult C.J."/>
            <person name="Agarwala R."/>
            <person name="Cherry J.L."/>
            <person name="DiCuccio M."/>
            <person name="Hlavina W."/>
            <person name="Kapustin Y."/>
            <person name="Meric P."/>
            <person name="Maglott D."/>
            <person name="Birtle Z."/>
            <person name="Marques A.C."/>
            <person name="Graves T."/>
            <person name="Zhou S."/>
            <person name="Teague B."/>
            <person name="Potamousis K."/>
            <person name="Churas C."/>
            <person name="Place M."/>
            <person name="Herschleb J."/>
            <person name="Runnheim R."/>
            <person name="Forrest D."/>
            <person name="Amos-Landgraf J."/>
            <person name="Schwartz D.C."/>
            <person name="Cheng Z."/>
            <person name="Lindblad-Toh K."/>
            <person name="Eichler E.E."/>
            <person name="Ponting C.P."/>
        </authorList>
    </citation>
    <scope>NUCLEOTIDE SEQUENCE [LARGE SCALE GENOMIC DNA]</scope>
    <source>
        <strain>C57BL/6J</strain>
    </source>
</reference>
<reference key="8">
    <citation type="journal article" date="2004" name="Genome Res.">
        <title>The status, quality, and expansion of the NIH full-length cDNA project: the Mammalian Gene Collection (MGC).</title>
        <authorList>
            <consortium name="The MGC Project Team"/>
        </authorList>
    </citation>
    <scope>NUCLEOTIDE SEQUENCE [LARGE SCALE MRNA] (ISOFORM STAT3A)</scope>
    <source>
        <strain>FVB/N</strain>
        <tissue>Mammary gland</tissue>
    </source>
</reference>
<reference key="9">
    <citation type="journal article" date="1995" name="Cell">
        <title>Maximal activation of transcription by Stat1 and Stat3 requires both tyrosine and serine phosphorylation.</title>
        <authorList>
            <person name="Wen Z."/>
            <person name="Zhong Z."/>
            <person name="Darnell J.E. Jr."/>
        </authorList>
    </citation>
    <scope>PHOSPHORYLATION AT SER-727</scope>
    <scope>MUTAGENESIS</scope>
</reference>
<reference key="10">
    <citation type="journal article" date="1997" name="Science">
        <title>Specific inhibition of Stat3 signal transduction by PIAS3.</title>
        <authorList>
            <person name="Chung C.D."/>
            <person name="Liao J."/>
            <person name="Liu B."/>
            <person name="Rao X."/>
            <person name="Jay P."/>
            <person name="Berta P."/>
            <person name="Shuai K."/>
        </authorList>
    </citation>
    <scope>INTERACTION WITH PIAS3</scope>
    <source>
        <tissue>Thymus</tissue>
    </source>
</reference>
<reference key="11">
    <citation type="journal article" date="2000" name="J. Biol. Chem.">
        <title>FER kinase activation of Stat3 is determined by the N-terminal sequence.</title>
        <authorList>
            <person name="Priel-Halachmi S."/>
            <person name="Ben-Dor I."/>
            <person name="Shpungin S."/>
            <person name="Tennenbaum T."/>
            <person name="Molavani H."/>
            <person name="Bachrach M."/>
            <person name="Salzberg S."/>
            <person name="Nir U."/>
        </authorList>
    </citation>
    <scope>PHOSPHORYLATION BY FER</scope>
    <scope>INTERACTION WITH FER</scope>
</reference>
<reference key="12">
    <citation type="journal article" date="2000" name="Proc. Natl. Acad. Sci. U.S.A.">
        <title>A Stat3-interacting protein (StIP1) regulates cytokine signal transduction.</title>
        <authorList>
            <person name="Collum R.G."/>
            <person name="Brutsaert S."/>
            <person name="Lee G."/>
            <person name="Schindler C."/>
        </authorList>
    </citation>
    <scope>INTERACTION WITH STATIP1</scope>
</reference>
<reference key="13">
    <citation type="journal article" date="2001" name="J. Biol. Chem.">
        <title>MSK1 and JNKs mediate phosphorylation of STAT3 in UVA-irradiated mouse epidermal JB6 cells.</title>
        <authorList>
            <person name="Zhang Y."/>
            <person name="Liu G."/>
            <person name="Dong Z."/>
        </authorList>
    </citation>
    <scope>PHOSPHORYLATION AT TYR-705 AND SER-727</scope>
</reference>
<reference key="14">
    <citation type="journal article" date="2001" name="Mol. Biol. Cell">
        <title>Identification of tyrosine residues in constitutively activated fibroblast growth factor receptor 3 involved in mitogenesis, Stat activation, and phosphatidylinositol 3-kinase activation.</title>
        <authorList>
            <person name="Hart K.C."/>
            <person name="Robertson S.C."/>
            <person name="Donoghue D.J."/>
        </authorList>
    </citation>
    <scope>FUNCTION</scope>
    <scope>SUBCELLULAR LOCATION</scope>
    <scope>PHOSPHORYLATION AT TYR-705</scope>
</reference>
<reference key="15">
    <citation type="journal article" date="2003" name="Nature">
        <title>STAT3 signalling is required for leptin regulation of energy balance but not reproduction.</title>
        <authorList>
            <person name="Bates S.H."/>
            <person name="Stearns W.H."/>
            <person name="Dundon T.A."/>
            <person name="Schubert M."/>
            <person name="Tso A.W."/>
            <person name="Wang Y."/>
            <person name="Banks A.S."/>
            <person name="Lavery H.J."/>
            <person name="Haq A.K."/>
            <person name="Maratos-Flier E."/>
            <person name="Neel B.G."/>
            <person name="Schwartz M.W."/>
            <person name="Myers M.G. Jr."/>
        </authorList>
    </citation>
    <scope>FUNCTION</scope>
</reference>
<reference key="16">
    <citation type="journal article" date="2004" name="Genes Dev.">
        <title>Role of the TAK1-NLK-STAT3 pathway in TGF-beta-mediated mesoderm induction.</title>
        <authorList>
            <person name="Ohkawara B."/>
            <person name="Shirakabe K."/>
            <person name="Hyodo-Miura J."/>
            <person name="Matsuo R."/>
            <person name="Ueno N."/>
            <person name="Matsumoto K."/>
            <person name="Shibuya H."/>
        </authorList>
    </citation>
    <scope>INTERACTION WITH NLK</scope>
    <scope>PHOSPHORYLATION AT SER-727</scope>
    <scope>MUTAGENESIS OF SER-727</scope>
</reference>
<reference key="17">
    <citation type="journal article" date="2005" name="Proc. Natl. Acad. Sci. U.S.A.">
        <title>STAT3 nuclear import is independent of tyrosine phosphorylation and mediated by importin-alpha3.</title>
        <authorList>
            <person name="Liu L."/>
            <person name="McBride K.M."/>
            <person name="Reich N.C."/>
        </authorList>
    </citation>
    <scope>SUBCELLULAR LOCATION</scope>
    <scope>MUTAGENESIS OF VAL-77; LEU-78; PHE-174; ARG-609 AND TYR-705</scope>
    <scope>INTERACTION WITH KPNA4 AND KPNA5</scope>
    <scope>NUCLEAR IMPORT MOTIF</scope>
</reference>
<reference key="18">
    <citation type="journal article" date="2005" name="Sheng Wu Hua Xue Yu Sheng Wu Wu Li Jin Zhan">
        <title>SIPAR interacts with STAT3 to regulate its signal pathway.</title>
        <authorList>
            <person name="Ning H."/>
            <person name="Rong Y."/>
            <person name="Zhang Y."/>
            <person name="Chang Z."/>
        </authorList>
    </citation>
    <scope>INTERACTION WITH SIPAR</scope>
    <source>
        <strain>Swiss Webster / NIH</strain>
    </source>
</reference>
<reference key="19">
    <citation type="journal article" date="2006" name="J. Biol. Chem.">
        <title>Leptin signaling promotes the growth of mammary tumors and increases the expression of vascular endothelial growth factor (VEGF) and its receptor type two (VEGF-R2).</title>
        <authorList>
            <person name="Gonzalez R.R."/>
            <person name="Cherfils S."/>
            <person name="Escobar M."/>
            <person name="Yoo J.H."/>
            <person name="Carino C."/>
            <person name="Styer A.K."/>
            <person name="Sullivan B.T."/>
            <person name="Sakamoto H."/>
            <person name="Olawaiye A."/>
            <person name="Serikawa T."/>
            <person name="Lynch M.P."/>
            <person name="Rueda B.R."/>
        </authorList>
    </citation>
    <scope>FUNCTION</scope>
    <scope>PHOSPHORYLATION</scope>
</reference>
<reference key="20">
    <citation type="journal article" date="2006" name="J. Cell Biol.">
        <title>Stat3 regulates microtubules by antagonizing the depolymerization activity of stathmin.</title>
        <authorList>
            <person name="Ng D.C."/>
            <person name="Lin B.H."/>
            <person name="Lim C.P."/>
            <person name="Huang G."/>
            <person name="Zhang T."/>
            <person name="Poli V."/>
            <person name="Cao X."/>
        </authorList>
    </citation>
    <scope>INTERACTION WITH STMN3</scope>
</reference>
<reference key="21">
    <citation type="journal article" date="2008" name="Int. Immunol.">
        <title>BART is essential for nuclear retention of STAT3.</title>
        <authorList>
            <person name="Muromoto R."/>
            <person name="Sekine Y."/>
            <person name="Imoto S."/>
            <person name="Ikeda O."/>
            <person name="Okayama T."/>
            <person name="Sato N."/>
            <person name="Matsuda T."/>
        </authorList>
    </citation>
    <scope>INTERACTION WITH ARL2BP</scope>
</reference>
<reference key="22">
    <citation type="journal article" date="2008" name="J. Proteome Res.">
        <title>Large-scale identification and evolution indexing of tyrosine phosphorylation sites from murine brain.</title>
        <authorList>
            <person name="Ballif B.A."/>
            <person name="Carey G.R."/>
            <person name="Sunyaev S.R."/>
            <person name="Gygi S.P."/>
        </authorList>
    </citation>
    <scope>PHOSPHORYLATION [LARGE SCALE ANALYSIS] AT TYR-705</scope>
    <scope>IDENTIFICATION BY MASS SPECTROMETRY [LARGE SCALE ANALYSIS]</scope>
    <source>
        <tissue>Brain</tissue>
    </source>
</reference>
<reference key="23">
    <citation type="journal article" date="2008" name="Mol. Endocrinol.">
        <title>Nescient helix-loop-helix 2 interacts with signal transducer and activator of transcription 3 to regulate transcription of prohormone convertase 1/3.</title>
        <authorList>
            <person name="Fox D.L."/>
            <person name="Good D.J."/>
        </authorList>
    </citation>
    <scope>INTERACTION WITH NHLH1</scope>
</reference>
<reference key="24">
    <citation type="journal article" date="2010" name="Cell">
        <title>A tissue-specific atlas of mouse protein phosphorylation and expression.</title>
        <authorList>
            <person name="Huttlin E.L."/>
            <person name="Jedrychowski M.P."/>
            <person name="Elias J.E."/>
            <person name="Goswami T."/>
            <person name="Rad R."/>
            <person name="Beausoleil S.A."/>
            <person name="Villen J."/>
            <person name="Haas W."/>
            <person name="Sowa M.E."/>
            <person name="Gygi S.P."/>
        </authorList>
    </citation>
    <scope>PHOSPHORYLATION [LARGE SCALE ANALYSIS] AT THR-714 AND SER-727</scope>
    <scope>IDENTIFICATION BY MASS SPECTROMETRY [LARGE SCALE ANALYSIS]</scope>
    <source>
        <tissue>Brain</tissue>
        <tissue>Brown adipose tissue</tissue>
        <tissue>Heart</tissue>
        <tissue>Kidney</tissue>
        <tissue>Liver</tissue>
        <tissue>Lung</tissue>
        <tissue>Pancreas</tissue>
        <tissue>Spleen</tissue>
        <tissue>Testis</tissue>
    </source>
</reference>
<reference key="25">
    <citation type="journal article" date="2010" name="J. Biol. Chem.">
        <title>Role of NEK6 in tumor promoter-induced transformation in JB6 C141 mouse skin epidermal cells.</title>
        <authorList>
            <person name="Jeon Y.J."/>
            <person name="Lee K.Y."/>
            <person name="Cho Y.Y."/>
            <person name="Pugliese A."/>
            <person name="Kim H.G."/>
            <person name="Jeong C.H."/>
            <person name="Bode A.M."/>
            <person name="Dong Z."/>
        </authorList>
    </citation>
    <scope>PHOSPHORYLATION AT SER-727</scope>
    <scope>INTERACTION WITH NEK6</scope>
</reference>
<reference key="26">
    <citation type="journal article" date="2010" name="J. Cell. Mol. Med.">
        <title>Cross-talk between calcineurin/NFAT and Jak/STAT signalling induces cardioprotective alphaB-crystallin gene expression in response to hypertrophic stimuli.</title>
        <authorList>
            <person name="Manukyan I."/>
            <person name="Galatioto J."/>
            <person name="Mascareno E."/>
            <person name="Bhaduri S."/>
            <person name="Siddiqui M.A."/>
        </authorList>
    </citation>
    <scope>FUNCTION</scope>
    <scope>IDENTIFICATION IN COMPLEX WITH NFATC3 AND NFATC4</scope>
    <scope>SUBCELLULAR LOCATION</scope>
    <scope>TISSUE SPECIFICITY</scope>
    <scope>PHOSPHORYLATION AT TYR-705</scope>
</reference>
<reference key="27">
    <citation type="journal article" date="2011" name="J. Biol. Chem.">
        <title>Mechanisms of STAT protein activation by oncogenic KIT mutants in neoplastic mast cells.</title>
        <authorList>
            <person name="Chaix A."/>
            <person name="Lopez S."/>
            <person name="Voisset E."/>
            <person name="Gros L."/>
            <person name="Dubreuil P."/>
            <person name="De Sepulveda P."/>
        </authorList>
    </citation>
    <scope>PHOSPHORYLATION IN RESPONSE TO KIT SIGNALING</scope>
</reference>
<reference key="28">
    <citation type="journal article" date="2012" name="Mol. Cell">
        <title>Cytoplasmic STAT3 represses autophagy by inhibiting PKR activity.</title>
        <authorList>
            <person name="Shen S."/>
            <person name="Niso-Santano M."/>
            <person name="Adjemian S."/>
            <person name="Takehara T."/>
            <person name="Malik S.A."/>
            <person name="Minoux H."/>
            <person name="Souquere S."/>
            <person name="Marino G."/>
            <person name="Lachkar S."/>
            <person name="Senovilla L."/>
            <person name="Galluzzi L."/>
            <person name="Kepp O."/>
            <person name="Pierron G."/>
            <person name="Maiuri M.C."/>
            <person name="Hikita H."/>
            <person name="Kroemer R."/>
            <person name="Kroemer G."/>
        </authorList>
    </citation>
    <scope>FUNCTION</scope>
</reference>
<reference key="29">
    <citation type="journal article" date="2013" name="Cell Rep.">
        <title>Conserved regulation of the Jak/STAT pathway by the endosomal protein asrij maintains stem cell potency.</title>
        <authorList>
            <person name="Sinha A."/>
            <person name="Khadilkar R.J."/>
            <person name="Vinay K.S."/>
            <person name="Roychowdhury Sinha A."/>
            <person name="Inamdar M.S."/>
        </authorList>
    </citation>
    <scope>INTERACTION WITH OCIAD1</scope>
    <scope>SUBUNIT</scope>
</reference>
<reference key="30">
    <citation type="journal article" date="2013" name="Cell. Signal.">
        <title>SIPAR negatively regulates STAT3 signaling and inhibits progression of melanoma.</title>
        <authorList>
            <person name="Ren F."/>
            <person name="Su F."/>
            <person name="Ning H."/>
            <person name="Wang Y."/>
            <person name="Geng Y."/>
            <person name="Feng Y."/>
            <person name="Wang Y."/>
            <person name="Zhang Y."/>
            <person name="Jin Z."/>
            <person name="Li Y."/>
            <person name="Jia B."/>
            <person name="Chang Z."/>
        </authorList>
    </citation>
    <scope>FUNCTION</scope>
    <scope>INTERACTION WITH FAM220A</scope>
    <scope>SUBCELLULAR LOCATION</scope>
    <scope>MUTAGENESIS OF TYR-705</scope>
</reference>
<reference key="31">
    <citation type="journal article" date="2013" name="J. Exp. Med.">
        <title>Innate Stat3-mediated induction of the antimicrobial protein Reg3gamma is required for host defense against MRSA pneumonia.</title>
        <authorList>
            <person name="Choi S.M."/>
            <person name="McAleer J.P."/>
            <person name="Zheng M."/>
            <person name="Pociask D.A."/>
            <person name="Kaplan M.H."/>
            <person name="Qin S."/>
            <person name="Reinhart T.A."/>
            <person name="Kolls J.K."/>
        </authorList>
    </citation>
    <scope>FUNCTION</scope>
    <scope>TISSUE SPECIFICITY</scope>
    <scope>INDUCTION BY S.AUREUS INFECTION</scope>
    <scope>PHOSPHORYLATION</scope>
</reference>
<reference key="32">
    <citation type="journal article" date="2015" name="FEBS Lett.">
        <title>Nuclear termination of STAT3 signaling through SIPAR (STAT3-Interacting Protein As a Repressor)-dependent recruitment of T cell tyrosine phosphatase TC-PTP.</title>
        <authorList>
            <person name="Ren F."/>
            <person name="Geng Y."/>
            <person name="Minami T."/>
            <person name="Qiu Y."/>
            <person name="Feng Y."/>
            <person name="Liu C."/>
            <person name="Zhao J."/>
            <person name="Wang Y."/>
            <person name="Fan X."/>
            <person name="Wang Y."/>
            <person name="Li M."/>
            <person name="Li J."/>
            <person name="Chang Z."/>
        </authorList>
    </citation>
    <scope>FUNCTION</scope>
    <scope>INTERACTION WITH FAM220A AND PTPN2</scope>
    <scope>SUBCELLULAR LOCATION</scope>
    <scope>MUTAGENESIS OF TYR-705</scope>
</reference>
<reference key="33">
    <citation type="journal article" date="2018" name="Cell Rep.">
        <title>Salmonella Activation of STAT3 Signaling by SarA Effector Promotes Intracellular Replication and Production of IL-10.</title>
        <authorList>
            <person name="Jaslow S.L."/>
            <person name="Gibbs K.D."/>
            <person name="Fricke W.F."/>
            <person name="Wang L."/>
            <person name="Pittman K.J."/>
            <person name="Mammel M.K."/>
            <person name="Thaden J.T."/>
            <person name="Fowler V.G. Jr."/>
            <person name="Hammer G.E."/>
            <person name="Elfenbein J.R."/>
            <person name="Ko D.C."/>
        </authorList>
    </citation>
    <scope>PHOSPHORYLATION AT TYR-705 (MICROBIAL INFECTION)</scope>
    <source>
        <strain>C57BL/6J</strain>
    </source>
</reference>
<reference key="34">
    <citation type="journal article" date="1998" name="Nature">
        <title>Three-dimensional structure of the Stat3beta homodimer bound to DNA.</title>
        <authorList>
            <person name="Becker S."/>
            <person name="Groner B."/>
            <person name="Mueller C.W."/>
        </authorList>
    </citation>
    <scope>X-RAY CRYSTALLOGRAPHY (2.25 ANGSTROMS) OF 136-716</scope>
</reference>
<reference key="35">
    <citation type="journal article" date="1997" name="Proc. Natl. Acad. Sci. U.S.A.">
        <title>Targeted disruption of the mouse Stat3 gene leads to early embryonic lethality.</title>
        <authorList>
            <person name="Takeda K."/>
            <person name="Noguchi K."/>
            <person name="Shi W."/>
            <person name="Tanaka T."/>
            <person name="Matsumoto M."/>
            <person name="Yoshida N."/>
            <person name="Kishimoto T."/>
            <person name="Akira S."/>
        </authorList>
    </citation>
    <scope>DISRUPTION PHENOTYPE</scope>
</reference>
<reference key="36">
    <citation type="journal article" date="2010" name="Endocrinology">
        <title>Glucose intolerance and impaired insulin secretion in pancreas-specific signal transducer and activator of transcription-3 knockout mice are associated with microvascular alterations in the pancreas.</title>
        <authorList>
            <person name="Kostromina E."/>
            <person name="Gustavsson N."/>
            <person name="Wang X."/>
            <person name="Lim C.Y."/>
            <person name="Radda G.K."/>
            <person name="Li C."/>
            <person name="Han W."/>
        </authorList>
    </citation>
    <scope>FUNCTION</scope>
</reference>
<gene>
    <name evidence="39" type="primary">Stat3</name>
    <name evidence="31 32" type="synonym">Aprf</name>
</gene>
<accession>P42227</accession>
<accession>A2A5D1</accession>
<accession>B7ZC17</accession>
<protein>
    <recommendedName>
        <fullName evidence="39">Signal transducer and activator of transcription 3</fullName>
    </recommendedName>
    <alternativeName>
        <fullName evidence="31 32">Acute-phase response factor</fullName>
    </alternativeName>
</protein>
<name>STAT3_MOUSE</name>
<feature type="initiator methionine" description="Removed" evidence="1">
    <location>
        <position position="1"/>
    </location>
</feature>
<feature type="chain" id="PRO_0000182418" description="Signal transducer and activator of transcription 3">
    <location>
        <begin position="2"/>
        <end position="770"/>
    </location>
</feature>
<feature type="domain" description="SH2" evidence="3">
    <location>
        <begin position="580"/>
        <end position="670"/>
    </location>
</feature>
<feature type="short sequence motif" description="Essential for nuclear import">
    <location>
        <begin position="150"/>
        <end position="162"/>
    </location>
</feature>
<feature type="modified residue" description="N-acetylalanine" evidence="1">
    <location>
        <position position="2"/>
    </location>
</feature>
<feature type="modified residue" description="N6-acetyllysine" evidence="1">
    <location>
        <position position="49"/>
    </location>
</feature>
<feature type="modified residue" description="N6-acetyllysine" evidence="1">
    <location>
        <position position="87"/>
    </location>
</feature>
<feature type="modified residue" description="Allysine; alternate" evidence="1">
    <location>
        <position position="601"/>
    </location>
</feature>
<feature type="modified residue" description="N6-acetyllysine; alternate" evidence="1">
    <location>
        <position position="601"/>
    </location>
</feature>
<feature type="modified residue" description="Allysine; alternate" evidence="1">
    <location>
        <position position="615"/>
    </location>
</feature>
<feature type="modified residue" description="N6-acetyllysine; alternate" evidence="1">
    <location>
        <position position="615"/>
    </location>
</feature>
<feature type="modified residue" description="Allysine; alternate" evidence="1">
    <location>
        <position position="631"/>
    </location>
</feature>
<feature type="modified residue" description="N6-acetyllysine; alternate" evidence="1">
    <location>
        <position position="631"/>
    </location>
</feature>
<feature type="modified residue" description="Phosphotyrosine; by TYK2" evidence="1">
    <location>
        <position position="640"/>
    </location>
</feature>
<feature type="modified residue" description="Allysine; alternate" evidence="1">
    <location>
        <position position="685"/>
    </location>
</feature>
<feature type="modified residue" description="N6-acetyllysine; alternate" evidence="1">
    <location>
        <position position="685"/>
    </location>
</feature>
<feature type="modified residue" description="Phosphotyrosine; by FER and PTK6" evidence="6 7 15 40">
    <location>
        <position position="705"/>
    </location>
</feature>
<feature type="modified residue" description="N6-acetyllysine" evidence="1">
    <location>
        <position position="707"/>
    </location>
</feature>
<feature type="modified residue" description="Phosphothreonine" evidence="41">
    <location>
        <position position="714"/>
    </location>
</feature>
<feature type="modified residue" description="Phosphoserine; by DYRK2, NLK, NEK6, IRAK1, RPS6KA5, ZIPK/DAPK3 and PKC/PRKCE" evidence="35 36 37 38 41">
    <location>
        <position position="727"/>
    </location>
</feature>
<feature type="splice variant" id="VSP_010475" description="In isoform Del-701." evidence="32">
    <location>
        <position position="701"/>
    </location>
</feature>
<feature type="splice variant" id="VSP_006287" description="In isoform Stat3B." evidence="33">
    <original>TTCSNTIDLPMSPRTLDSLMQFGNNGEGAEPSAGGQFESLTFDMDLTSECATSPM</original>
    <variation>FIDAVWK</variation>
    <location>
        <begin position="716"/>
        <end position="770"/>
    </location>
</feature>
<feature type="mutagenesis site" description="No effect on nuclear import; when associated with A-78 and W-174." evidence="10">
    <original>V</original>
    <variation>A</variation>
    <location>
        <position position="77"/>
    </location>
</feature>
<feature type="mutagenesis site" description="No effect on nuclear import; when associated with A-77 and W-174." evidence="10">
    <original>L</original>
    <variation>A</variation>
    <location>
        <position position="78"/>
    </location>
</feature>
<feature type="mutagenesis site" description="No effect on nuclear import; when associated with A-77 and A-78." evidence="10">
    <original>F</original>
    <variation>W</variation>
    <location>
        <position position="174"/>
    </location>
</feature>
<feature type="mutagenesis site" description="No effect on nuclear localization; when associated with F-705." evidence="10">
    <original>R</original>
    <variation>A</variation>
    <location>
        <position position="609"/>
    </location>
</feature>
<feature type="mutagenesis site" description="Loss of interaction with Fam220a. No effect on nuclear localization; when associated with A-609." evidence="10 21 23">
    <original>Y</original>
    <variation>F</variation>
    <location>
        <position position="705"/>
    </location>
</feature>
<feature type="mutagenesis site" description="Decreased transcriptional activation." evidence="9">
    <original>S</original>
    <variation>A</variation>
    <location>
        <position position="727"/>
    </location>
</feature>
<feature type="sequence conflict" description="In Ref. 2; AAA19452." evidence="34" ref="2">
    <original>E</original>
    <variation>K</variation>
    <location>
        <position position="16"/>
    </location>
</feature>
<feature type="sequence conflict" description="In Ref. 2; AAA19452 and 4; AAC52612." evidence="34" ref="2 4">
    <original>S</original>
    <variation>T</variation>
    <location>
        <position position="25"/>
    </location>
</feature>
<feature type="sequence conflict" description="In Ref. 1; AAA37254." evidence="34" ref="1">
    <original>M</original>
    <variation>I</variation>
    <location>
        <position position="394"/>
    </location>
</feature>
<feature type="helix" evidence="45">
    <location>
        <begin position="3"/>
        <end position="8"/>
    </location>
</feature>
<feature type="turn" evidence="45">
    <location>
        <begin position="12"/>
        <end position="14"/>
    </location>
</feature>
<feature type="helix" evidence="45">
    <location>
        <begin position="15"/>
        <end position="20"/>
    </location>
</feature>
<feature type="strand" evidence="45">
    <location>
        <begin position="24"/>
        <end position="26"/>
    </location>
</feature>
<feature type="helix" evidence="45">
    <location>
        <begin position="28"/>
        <end position="33"/>
    </location>
</feature>
<feature type="helix" evidence="45">
    <location>
        <begin position="35"/>
        <end position="40"/>
    </location>
</feature>
<feature type="helix" evidence="45">
    <location>
        <begin position="43"/>
        <end position="46"/>
    </location>
</feature>
<feature type="helix" evidence="45">
    <location>
        <begin position="50"/>
        <end position="73"/>
    </location>
</feature>
<feature type="helix" evidence="45">
    <location>
        <begin position="77"/>
        <end position="94"/>
    </location>
</feature>
<feature type="helix" evidence="45">
    <location>
        <begin position="98"/>
        <end position="120"/>
    </location>
</feature>
<feature type="helix" evidence="42">
    <location>
        <begin position="139"/>
        <end position="180"/>
    </location>
</feature>
<feature type="helix" evidence="42">
    <location>
        <begin position="199"/>
        <end position="237"/>
    </location>
</feature>
<feature type="helix" evidence="42">
    <location>
        <begin position="239"/>
        <end position="251"/>
    </location>
</feature>
<feature type="helix" evidence="42">
    <location>
        <begin position="261"/>
        <end position="290"/>
    </location>
</feature>
<feature type="turn" evidence="42">
    <location>
        <begin position="297"/>
        <end position="301"/>
    </location>
</feature>
<feature type="helix" evidence="42">
    <location>
        <begin position="302"/>
        <end position="320"/>
    </location>
</feature>
<feature type="strand" evidence="42">
    <location>
        <begin position="321"/>
        <end position="328"/>
    </location>
</feature>
<feature type="strand" evidence="42">
    <location>
        <begin position="338"/>
        <end position="340"/>
    </location>
</feature>
<feature type="strand" evidence="42">
    <location>
        <begin position="345"/>
        <end position="353"/>
    </location>
</feature>
<feature type="helix" evidence="42">
    <location>
        <begin position="356"/>
        <end position="358"/>
    </location>
</feature>
<feature type="turn" evidence="42">
    <location>
        <begin position="359"/>
        <end position="361"/>
    </location>
</feature>
<feature type="strand" evidence="42">
    <location>
        <begin position="363"/>
        <end position="369"/>
    </location>
</feature>
<feature type="helix" evidence="42">
    <location>
        <begin position="371"/>
        <end position="373"/>
    </location>
</feature>
<feature type="strand" evidence="42">
    <location>
        <begin position="375"/>
        <end position="377"/>
    </location>
</feature>
<feature type="strand" evidence="42">
    <location>
        <begin position="384"/>
        <end position="388"/>
    </location>
</feature>
<feature type="strand" evidence="42">
    <location>
        <begin position="391"/>
        <end position="393"/>
    </location>
</feature>
<feature type="helix" evidence="44">
    <location>
        <begin position="400"/>
        <end position="402"/>
    </location>
</feature>
<feature type="strand" evidence="42">
    <location>
        <begin position="404"/>
        <end position="415"/>
    </location>
</feature>
<feature type="strand" evidence="42">
    <location>
        <begin position="418"/>
        <end position="420"/>
    </location>
</feature>
<feature type="helix" evidence="42">
    <location>
        <begin position="426"/>
        <end position="428"/>
    </location>
</feature>
<feature type="helix" evidence="42">
    <location>
        <begin position="432"/>
        <end position="434"/>
    </location>
</feature>
<feature type="strand" evidence="42">
    <location>
        <begin position="439"/>
        <end position="447"/>
    </location>
</feature>
<feature type="strand" evidence="42">
    <location>
        <begin position="450"/>
        <end position="457"/>
    </location>
</feature>
<feature type="strand" evidence="42">
    <location>
        <begin position="461"/>
        <end position="466"/>
    </location>
</feature>
<feature type="helix" evidence="42">
    <location>
        <begin position="467"/>
        <end position="469"/>
    </location>
</feature>
<feature type="helix" evidence="42">
    <location>
        <begin position="470"/>
        <end position="483"/>
    </location>
</feature>
<feature type="helix" evidence="42">
    <location>
        <begin position="492"/>
        <end position="494"/>
    </location>
</feature>
<feature type="helix" evidence="42">
    <location>
        <begin position="501"/>
        <end position="515"/>
    </location>
</feature>
<feature type="helix" evidence="42">
    <location>
        <begin position="522"/>
        <end position="533"/>
    </location>
</feature>
<feature type="helix" evidence="42">
    <location>
        <begin position="546"/>
        <end position="549"/>
    </location>
</feature>
<feature type="strand" evidence="44">
    <location>
        <begin position="557"/>
        <end position="559"/>
    </location>
</feature>
<feature type="helix" evidence="42">
    <location>
        <begin position="561"/>
        <end position="574"/>
    </location>
</feature>
<feature type="strand" evidence="43">
    <location>
        <begin position="575"/>
        <end position="577"/>
    </location>
</feature>
<feature type="helix" evidence="42">
    <location>
        <begin position="578"/>
        <end position="581"/>
    </location>
</feature>
<feature type="helix" evidence="42">
    <location>
        <begin position="593"/>
        <end position="595"/>
    </location>
</feature>
<feature type="turn" evidence="42">
    <location>
        <begin position="596"/>
        <end position="600"/>
    </location>
</feature>
<feature type="strand" evidence="42">
    <location>
        <begin position="608"/>
        <end position="610"/>
    </location>
</feature>
<feature type="strand" evidence="42">
    <location>
        <begin position="619"/>
        <end position="621"/>
    </location>
</feature>
<feature type="strand" evidence="42">
    <location>
        <begin position="626"/>
        <end position="628"/>
    </location>
</feature>
<feature type="helix" evidence="42">
    <location>
        <begin position="642"/>
        <end position="645"/>
    </location>
</feature>
<feature type="helix" evidence="42">
    <location>
        <begin position="650"/>
        <end position="653"/>
    </location>
</feature>
<feature type="strand" evidence="42">
    <location>
        <begin position="664"/>
        <end position="666"/>
    </location>
</feature>
<feature type="strand" evidence="42">
    <location>
        <begin position="671"/>
        <end position="673"/>
    </location>
</feature>
<feature type="turn" evidence="42">
    <location>
        <begin position="674"/>
        <end position="676"/>
    </location>
</feature>
<feature type="turn" evidence="42">
    <location>
        <begin position="679"/>
        <end position="683"/>
    </location>
</feature>
<feature type="helix" evidence="42">
    <location>
        <begin position="684"/>
        <end position="686"/>
    </location>
</feature>
<comment type="function">
    <text evidence="1 6 8 12 15 16 19 20 21 23">Signal transducer and transcription activator that mediates cellular responses to interleukins, KITLG/SCF, LEP and other growth factors (PubMed:23917203, PubMed:26026268). Once activated, recruits coactivators, such as NCOA1 or MED1, to the promoter region of the target gene (By similarity). May mediate cellular responses to activated FGFR1, FGFR2, FGFR3 and FGFR4 (By similarity). Upon activation of IL6ST/gp130 signaling by interleukin-6 (IL6), binds to the IL6-responsive elements identified in the promoters of various acute-phase protein genes (By similarity). Activated by IL31 through IL31RA (By similarity). Acts as a regulator of inflammatory response by regulating differentiation of naive CD4(+) T-cells into T-helper Th17 or regulatory T-cells (Treg): acetylation promotes its transcription activity and cell differentiation while deacetylation and oxidation of lysine residues by LOXL3 inhibits differentiation (By similarity). Involved in cell cycle regulation by inducing the expression of key genes for the progression from G1 to S phase, such as CCND1 (By similarity). Mediates the effects of LEP on melanocortin production, body energy homeostasis and lactation (PubMed:12594516). May play an apoptotic role by transctivating BIRC5 expression under LEP activation (PubMed:16825198). Cytoplasmic STAT3 represses macroautophagy by inhibiting EIF2AK2/PKR activity (By similarity). Plays a crucial role in basal beta cell functions, such as regulation of insulin secretion (PubMed:20215569). Following JAK/STAT signaling activation and as part of a complex with NFATC3 and NFATC4, binds to the alpha-beta E4 promoter region of CRYAB and activates transcription in cardiomyocytes (PubMed:19538478). Plays an important role in host defense in methicillin-resistant S.aureus lung infection by regulating the expression of the antimicrobial lectin REG3G (PubMed:23401489).</text>
</comment>
<comment type="subunit">
    <text evidence="1 2 4 5 7 9 10 11 13 14 15 17 21 22 23 29 30">Forms a homodimer or a heterodimer with a related family member (at least STAT1). Component of a promoter-binding complex composed of STAT3, NFATC3 and NFATC4; complex formation is enhanced by calcineurin (PubMed:19538478). Interacts with IL31RA, NCOA1, PELP1, SIPAR, SOCS7, STATIP1 and TMF1. Interacts with IL23R in presence of IL23. Interacts (via SH2 domain) with NLK. Interacts with ARL2BP; the interaction is enhanced by LIF and JAK1 expression (By similarity). Interacts with KPNA4 and KPNA5; KPNA4 may be the primary mediator of nuclear import (By similarity). Interacts with CAV2; the interaction is increased on insulin-induced tyrosine phosphorylation of CAV2 and leads to STAT3 activation (By similarity). Interacts with ARL2BP; interaction is enhanced with ARL2. Interacts with NEK6 (By similarity). Binds to CDK9 when activated and nuclear. Interacts with BMX. Interacts with ZIPK/DAPK3. Interacts with PIAS3; the interaction occurs on stimulation by IL6, CNTF or OSM and inhibits the DNA binding activity of STAT3. In prostate cancer cells, interacts with PRKCE and promotes DNA binding activity of STAT3. Interacts with STMN3, antagonizing its microtubule-destabilizing activity. Interacts with the 'Lys-129' acetylated form of BIRC5/survivin. Interacts with FER. Interacts (via SH2 domain) with EIF2AK2/PKR (via the kinase catalytic domain) (By similarity). Interacts with FGFR4 (By similarity). Interacts with INPP5F; the interaction is independent of STAT3 Tyr-705 phosphorylation status (By similarity). Interacts with OCIAD1 (PubMed:23972987). Interacts with OCIAD2 (By similarity). Interacts (unphosphorylated or phosphorylated at Ser-727) with PHB1 (By similarity). Interacts and may form heterodimers with NHLH1 (PubMed:18356286). Found in a complex with SLC39A6, SLC39A10 and with the 'Ser-727' phosphorylated form of STAT3 throughout mitosis (By similarity). Interacts (when acetylated) with EP300 (via bromo domain); interaction takes place following STAT3 acetylation by EP300 and promotes enhanceosome assembly (By similarity). Interacts (when acetylated) with BRD2 (via bromo domain); interaction promotes STAT3 recruitment to chromatin and T-helper Th17 cell differentiation (By similarity). Interacts with FAM220A/SIPAR; the interaction occurs in both the nucleus and the cytoplasm, is enhanced by IL6 and promotes STAT3 dephosphorylation (PubMed:23917203). Interacts in both unphosphorylated and phosphorylated forms with FAM220A but interacts preferentially in the phosphorylated form in the nucleus (PubMed:23917203, PubMed:26026268). Interacts with PTPN2; the interaction is promoted by FAM220A and leads to STAT3 dephosphorylation which negatively regulates STAT3 transcriptional activator activity (PubMed:26026268).</text>
</comment>
<comment type="interaction">
    <interactant intactId="EBI-602878">
        <id>P42227</id>
    </interactant>
    <interactant intactId="EBI-646949">
        <id>Q80VH0</id>
        <label>Bank1</label>
    </interactant>
    <organismsDiffer>false</organismsDiffer>
    <experiments>4</experiments>
</comment>
<comment type="interaction">
    <interactant intactId="EBI-602878">
        <id>P42227</id>
    </interactant>
    <interactant intactId="EBI-847380">
        <id>Q64261</id>
        <label>Cdk6</label>
    </interactant>
    <organismsDiffer>false</organismsDiffer>
    <experiments>3</experiments>
</comment>
<comment type="interaction">
    <interactant intactId="EBI-602878">
        <id>P42227</id>
    </interactant>
    <interactant intactId="EBI-299046">
        <id>P23927</id>
        <label>Cryab</label>
    </interactant>
    <organismsDiffer>false</organismsDiffer>
    <experiments>3</experiments>
</comment>
<comment type="interaction">
    <interactant intactId="EBI-602878">
        <id>P42227</id>
    </interactant>
    <interactant intactId="EBI-77359">
        <id>O54784</id>
        <label>Dapk3</label>
    </interactant>
    <organismsDiffer>false</organismsDiffer>
    <experiments>8</experiments>
</comment>
<comment type="interaction">
    <interactant intactId="EBI-602878">
        <id>P42227</id>
    </interactant>
    <interactant intactId="EBI-2945468">
        <id>P70424</id>
        <label>Erbb2</label>
    </interactant>
    <organismsDiffer>false</organismsDiffer>
    <experiments>4</experiments>
</comment>
<comment type="interaction">
    <interactant intactId="EBI-602878">
        <id>P42227</id>
    </interactant>
    <interactant intactId="EBI-642449">
        <id>O35387</id>
        <label>Hax1</label>
    </interactant>
    <organismsDiffer>false</organismsDiffer>
    <experiments>11</experiments>
</comment>
<comment type="interaction">
    <interactant intactId="EBI-602878">
        <id>P42227</id>
    </interactant>
    <interactant intactId="EBI-346821">
        <id>Q00175</id>
        <label>Pgr</label>
    </interactant>
    <organismsDiffer>false</organismsDiffer>
    <experiments>4</experiments>
</comment>
<comment type="interaction">
    <interactant intactId="EBI-602878">
        <id>P42227</id>
    </interactant>
    <interactant intactId="EBI-602878">
        <id>P42227</id>
        <label>Stat3</label>
    </interactant>
    <organismsDiffer>false</organismsDiffer>
    <experiments>3</experiments>
</comment>
<comment type="interaction">
    <interactant intactId="EBI-602878">
        <id>P42227</id>
    </interactant>
    <interactant intactId="EBI-300116">
        <id>P48025</id>
        <label>Syk</label>
    </interactant>
    <organismsDiffer>false</organismsDiffer>
    <experiments>5</experiments>
</comment>
<comment type="interaction">
    <interactant intactId="EBI-602878">
        <id>P42227</id>
    </interactant>
    <interactant intactId="EBI-719602">
        <id>P30084</id>
        <label>ECHS1</label>
    </interactant>
    <organismsDiffer>true</organismsDiffer>
    <experiments>3</experiments>
</comment>
<comment type="interaction">
    <interactant intactId="EBI-602878">
        <id>P42227</id>
    </interactant>
    <interactant intactId="EBI-372506">
        <id>Q8TAE8</id>
        <label>GADD45GIP1</label>
    </interactant>
    <organismsDiffer>true</organismsDiffer>
    <experiments>3</experiments>
</comment>
<comment type="interaction">
    <interactant intactId="EBI-602878">
        <id>P42227</id>
    </interactant>
    <interactant intactId="EBI-1030834">
        <id>P40189</id>
        <label>IL6ST</label>
    </interactant>
    <organismsDiffer>true</organismsDiffer>
    <experiments>4</experiments>
</comment>
<comment type="interaction">
    <interactant intactId="EBI-602878">
        <id>P42227</id>
    </interactant>
    <interactant intactId="EBI-310491">
        <id>Q9NRF2</id>
        <label>SH2B1</label>
    </interactant>
    <organismsDiffer>true</organismsDiffer>
    <experiments>5</experiments>
</comment>
<comment type="subcellular location">
    <subcellularLocation>
        <location evidence="21">Cytoplasm</location>
    </subcellularLocation>
    <subcellularLocation>
        <location evidence="15 21 23">Nucleus</location>
    </subcellularLocation>
    <text evidence="1 2">Predominantly present in the cytoplasm without stimuli. Upon leukemia inhibitory factor (LIF) stimulation, accumulates in the nucleus. The complex composed of BART and ARL2 plays an important role in the nuclear translocation and retention of STAT3 (By similarity). Shuttles between the nucleus and the cytoplasm. Translocated into the nucleus upon tyrosine phosphorylation and dimerization, in response to signaling by activated FGFR1, FGFR2, FGFR3 or FGFR4. Constitutive nuclear presence is independent of tyrosine phosphorylation. Translocates to the nucleus in the presence of EDN1 (By similarity).</text>
</comment>
<comment type="alternative products">
    <event type="alternative splicing"/>
    <isoform>
        <id>P42227-1</id>
        <name>Stat3A</name>
        <sequence type="displayed"/>
    </isoform>
    <isoform>
        <id>P42227-2</id>
        <name>Stat3B</name>
        <sequence type="described" ref="VSP_006287"/>
    </isoform>
    <isoform>
        <id>P42227-3</id>
        <name>Del-701</name>
        <sequence type="described" ref="VSP_010475"/>
    </isoform>
</comment>
<comment type="tissue specificity">
    <text evidence="15 20 25">Expressed in ventricular cardiomyocytes (at protein level) (PubMed:19538478). Expressed in the lung (at protein level) (PubMed:23401489). Expressed in the liver, spleen and kidney (PubMed:7512451).</text>
</comment>
<comment type="tissue specificity">
    <molecule>Isoform Stat3B</molecule>
    <text evidence="27">Expressed in the liver.</text>
</comment>
<comment type="induction">
    <text evidence="20">Induced by methicillin-resistant S.aureus infection in the lung.</text>
</comment>
<comment type="PTM">
    <text evidence="1 4 6 7 9 12 15 17 18 20 26">Activated through tyrosine phosphorylation by BMX. Tyrosine phosphorylated in response to IL6, IL11, CNTF, LIF, KITLG/SCF, CSF1, EGF, PDGF, IFN-alpha, LEP and OSM. Activated KIT promotes phosphorylation on tyrosine residues and subsequent translocation to the nucleus. Tyrosine phosphorylated in response to constitutively activated FGFR1, FGFR2, FGFR3 and FGFR4. Phosphorylated on serine upon DNA damage, probably by ATM or ATR. Serine phosphorylation is important for the formation of stable DNA-binding STAT3 homodimers and maximal transcriptional activity. ARL2BP may participate in keeping the phosphorylated state of STAT3 within the nucleus. Tyrosine phosphorylated upon stimulation with EGF. Upon LPS challenge, phosphorylated within the nucleus by IRAK1 (By similarity). Upon UV-A treatment, phosphorylated on Ser-727 by RPS6KA5 (By similarity). Dephosphorylation on tyrosine residues by PTPN2 negatively regulates IL6/interleukin-6 signaling (By similarity). Phosphorylation at Tyr-705 by PTK6, isoform M2 of PKM (PKM2) or FER leads to an increase of its transcriptional activity (By similarity). Phosphorylation at Tyr-705 is increased in the presence of calcineurin (PubMed:19538478). Phosphorylation at Tyr-640 by TYK2 negatively regulates transcriptional activity (By similarity).</text>
</comment>
<comment type="PTM">
    <text evidence="1">Acetylated on lysine residues by EP300/p300, promoting its activation (By similarity). Acetylation at Lys-49 and Lys-87 by EP300/p300 promotes its activation (By similarity). Acetylation at Lys-87 by EP300/p300 promotes its association with BRD2 and recruitment to chromatin (By similarity). Deacetylated at Lys-49 and Lys-87 by HDAC1 (By similarity). Acetylation at Lys-685 by EP300/p300 promotes its homodimerization and activation (By similarity). Deacetylated at Lys-685 by HDAC3 (By similarity). Acetylated on lysine residues by CREBBP (By similarity). Deacetylation by LOXL3 leads to disrupt STAT3 dimerization and inhibit STAT3 transcription activity (By similarity). Oxidation of lysine residues to allysine on STAT3 preferentially takes place on lysine residues that are acetylated (By similarity).</text>
</comment>
<comment type="PTM">
    <text evidence="1">Some lysine residues are oxidized to allysine by LOXL3, leading to disrupt STAT3 dimerization and inhibit STAT3 transcription activity. Oxidation of lysine residues to allysine on STAT3 preferentially takes place on lysine residues that are acetylated.</text>
</comment>
<comment type="PTM">
    <text evidence="24">(Microbial infection) Phosphorylated on Tyr-705 in the presence of S.typhimurium SarA.</text>
</comment>
<comment type="disruption phenotype">
    <text evidence="16 28">Early embryonic lethality, day 6.5-7.5. Conditional, tissue specific mutants are variably viable and show diverse defects including obesity, diabetes, thermal dysregulation and infertility.</text>
</comment>
<comment type="miscellaneous">
    <text>Involved in the gp130-mediated signaling pathway.</text>
</comment>
<comment type="similarity">
    <text evidence="34">Belongs to the transcription factor STAT family.</text>
</comment>
<organism>
    <name type="scientific">Mus musculus</name>
    <name type="common">Mouse</name>
    <dbReference type="NCBI Taxonomy" id="10090"/>
    <lineage>
        <taxon>Eukaryota</taxon>
        <taxon>Metazoa</taxon>
        <taxon>Chordata</taxon>
        <taxon>Craniata</taxon>
        <taxon>Vertebrata</taxon>
        <taxon>Euteleostomi</taxon>
        <taxon>Mammalia</taxon>
        <taxon>Eutheria</taxon>
        <taxon>Euarchontoglires</taxon>
        <taxon>Glires</taxon>
        <taxon>Rodentia</taxon>
        <taxon>Myomorpha</taxon>
        <taxon>Muroidea</taxon>
        <taxon>Muridae</taxon>
        <taxon>Murinae</taxon>
        <taxon>Mus</taxon>
        <taxon>Mus</taxon>
    </lineage>
</organism>
<keyword id="KW-0002">3D-structure</keyword>
<keyword id="KW-0007">Acetylation</keyword>
<keyword id="KW-0010">Activator</keyword>
<keyword id="KW-0011">Acute phase</keyword>
<keyword id="KW-0025">Alternative splicing</keyword>
<keyword id="KW-0963">Cytoplasm</keyword>
<keyword id="KW-0903">Direct protein sequencing</keyword>
<keyword id="KW-0238">DNA-binding</keyword>
<keyword id="KW-0539">Nucleus</keyword>
<keyword id="KW-0597">Phosphoprotein</keyword>
<keyword id="KW-1185">Reference proteome</keyword>
<keyword id="KW-0727">SH2 domain</keyword>
<keyword id="KW-0804">Transcription</keyword>
<keyword id="KW-0805">Transcription regulation</keyword>
<sequence length="770" mass="88054">MAQWNQLQQLDTRYLEQLHQLYSDSFPMELRQFLAPWIESQDWAYAASKESHATLVFHNLLGEIDQQYSRFLQESNVLYQHNLRRIKQFLQSRYLEKPMEIARIVARCLWEESRLLQTAATAAQQGGQANHPTAAVVTEKQQMLEQHLQDVRKRVQDLEQKMKVVENLQDDFDFNYKTLKSQGDMQDLNGNNQSVTRQKMQQLEQMLTALDQMRRSIVSELAGLLSAMEYVQKTLTDEELADWKRRQQIACIGGPPNICLDRLENWITSLAESQLQTRQQIKKLEELQQKVSYKGDPIVQHRPMLEERIVELFRNLMKSAFVVERQPCMPMHPDRPLVIKTGVQFTTKVRLLVKFPELNYQLKIKVCIDKDSGDVAALRGSRKFNILGTNTKVMNMEESNNGSLSAEFKHLTLREQRCGNGGRANCDASLIVTEELHLITFETEVYHQGLKIDLETHSLPVVVISNICQMPNAWASILWYNMLTNNPKNVNFFTKPPIGTWDQVAEVLSWQFSSTTKRGLSIEQLTTLAEKLLGPGVNYSGCQITWAKFCKENMAGKGFSFWVWLDNIIDLVKKYILALWNEGYIMGFISKERERAILSTKPPGTFLLRFSESSKEGGVTFTWVEKDISGKTQIQSVEPYTKQQLNNMSFAEIIMGYKIMDATNILVSPLVYLYPDIPKEEAFGKYCRPESQEHPEADPGSAAPYLKTKFICVTPTTCSNTIDLPMSPRTLDSLMQFGNNGEGAEPSAGGQFESLTFDMDLTSECATSPM</sequence>
<proteinExistence type="evidence at protein level"/>